<name>ATL4_HUMAN</name>
<feature type="signal peptide" evidence="2">
    <location>
        <begin position="1"/>
        <end position="24"/>
    </location>
</feature>
<feature type="chain" id="PRO_0000257966" description="ADAMTS-like protein 4" evidence="2">
    <location>
        <begin position="25"/>
        <end position="1074"/>
    </location>
</feature>
<feature type="domain" description="TSP type-1 1" evidence="3">
    <location>
        <begin position="48"/>
        <end position="93"/>
    </location>
</feature>
<feature type="domain" description="TSP type-1 2" evidence="3">
    <location>
        <begin position="723"/>
        <end position="782"/>
    </location>
</feature>
<feature type="domain" description="TSP type-1 3" evidence="3">
    <location>
        <begin position="783"/>
        <end position="842"/>
    </location>
</feature>
<feature type="domain" description="TSP type-1 4" evidence="3">
    <location>
        <begin position="845"/>
        <end position="909"/>
    </location>
</feature>
<feature type="domain" description="TSP type-1 5" evidence="3">
    <location>
        <begin position="910"/>
        <end position="969"/>
    </location>
</feature>
<feature type="domain" description="TSP type-1 6" evidence="3">
    <location>
        <begin position="970"/>
        <end position="1026"/>
    </location>
</feature>
<feature type="domain" description="PLAC" evidence="4">
    <location>
        <begin position="1029"/>
        <end position="1066"/>
    </location>
</feature>
<feature type="region of interest" description="Disordered" evidence="5">
    <location>
        <begin position="77"/>
        <end position="342"/>
    </location>
</feature>
<feature type="compositionally biased region" description="Polar residues" evidence="5">
    <location>
        <begin position="103"/>
        <end position="119"/>
    </location>
</feature>
<feature type="compositionally biased region" description="Basic and acidic residues" evidence="5">
    <location>
        <begin position="132"/>
        <end position="152"/>
    </location>
</feature>
<feature type="compositionally biased region" description="Polar residues" evidence="5">
    <location>
        <begin position="206"/>
        <end position="226"/>
    </location>
</feature>
<feature type="compositionally biased region" description="Gly residues" evidence="5">
    <location>
        <begin position="310"/>
        <end position="323"/>
    </location>
</feature>
<feature type="glycosylation site" description="N-linked (GlcNAc...) (complex) asparagine" evidence="9 11">
    <location>
        <position position="490"/>
    </location>
</feature>
<feature type="glycosylation site" description="N-linked (GlcNAc...) asparagine" evidence="2">
    <location>
        <position position="773"/>
    </location>
</feature>
<feature type="splice variant" id="VSP_055759" description="In isoform 3." evidence="17">
    <original>E</original>
    <variation>EAPLLPLRHAFFLLPGAGSGDSTG</variation>
    <location>
        <position position="411"/>
    </location>
</feature>
<feature type="splice variant" id="VSP_052183" description="In isoform 2." evidence="15 16">
    <original>CSAECGTGIQRRSVVCLGSGAALG</original>
    <variation>VSPEPPAISCILGNHAQDTSAFPA</variation>
    <location>
        <begin position="854"/>
        <end position="877"/>
    </location>
</feature>
<feature type="splice variant" id="VSP_052184" description="In isoform 2." evidence="15 16">
    <location>
        <begin position="878"/>
        <end position="1074"/>
    </location>
</feature>
<feature type="sequence variant" id="VAR_061918" description="In dbSNP:rs41317515." evidence="8">
    <original>A</original>
    <variation>P</variation>
    <location>
        <position position="193"/>
    </location>
</feature>
<feature type="sequence variant" id="VAR_061919" description="In dbSNP:rs56411234.">
    <original>R</original>
    <variation>H</variation>
    <location>
        <position position="1028"/>
    </location>
</feature>
<keyword id="KW-0025">Alternative splicing</keyword>
<keyword id="KW-0053">Apoptosis</keyword>
<keyword id="KW-0272">Extracellular matrix</keyword>
<keyword id="KW-0325">Glycoprotein</keyword>
<keyword id="KW-1267">Proteomics identification</keyword>
<keyword id="KW-1185">Reference proteome</keyword>
<keyword id="KW-0677">Repeat</keyword>
<keyword id="KW-0964">Secreted</keyword>
<keyword id="KW-0732">Signal</keyword>
<dbReference type="EMBL" id="AY358122">
    <property type="protein sequence ID" value="AAQ88489.1"/>
    <property type="molecule type" value="mRNA"/>
</dbReference>
<dbReference type="EMBL" id="AL356356">
    <property type="protein sequence ID" value="CAI15499.1"/>
    <property type="molecule type" value="Genomic_DNA"/>
</dbReference>
<dbReference type="EMBL" id="AL356356">
    <property type="protein sequence ID" value="CAI15500.2"/>
    <property type="molecule type" value="Genomic_DNA"/>
</dbReference>
<dbReference type="EMBL" id="BC027478">
    <property type="protein sequence ID" value="AAH27478.2"/>
    <property type="molecule type" value="mRNA"/>
</dbReference>
<dbReference type="EMBL" id="BC071852">
    <property type="protein sequence ID" value="AAH71852.1"/>
    <property type="molecule type" value="mRNA"/>
</dbReference>
<dbReference type="EMBL" id="BC094811">
    <property type="protein sequence ID" value="AAH94811.1"/>
    <property type="molecule type" value="mRNA"/>
</dbReference>
<dbReference type="EMBL" id="BC140800">
    <property type="protein sequence ID" value="AAI40801.1"/>
    <property type="molecule type" value="mRNA"/>
</dbReference>
<dbReference type="EMBL" id="AF217974">
    <property type="protein sequence ID" value="AAG17217.1"/>
    <property type="status" value="ALT_FRAME"/>
    <property type="molecule type" value="mRNA"/>
</dbReference>
<dbReference type="CCDS" id="CCDS30852.1">
    <molecule id="Q6UY14-2"/>
</dbReference>
<dbReference type="CCDS" id="CCDS72908.1">
    <molecule id="Q6UY14-3"/>
</dbReference>
<dbReference type="CCDS" id="CCDS955.1">
    <molecule id="Q6UY14-1"/>
</dbReference>
<dbReference type="RefSeq" id="NP_001275536.1">
    <property type="nucleotide sequence ID" value="NM_001288607.1"/>
</dbReference>
<dbReference type="RefSeq" id="NP_001275537.1">
    <molecule id="Q6UY14-3"/>
    <property type="nucleotide sequence ID" value="NM_001288608.2"/>
</dbReference>
<dbReference type="RefSeq" id="NP_001365525.1">
    <molecule id="Q6UY14-1"/>
    <property type="nucleotide sequence ID" value="NM_001378596.1"/>
</dbReference>
<dbReference type="RefSeq" id="NP_061905.2">
    <molecule id="Q6UY14-1"/>
    <property type="nucleotide sequence ID" value="NM_019032.5"/>
</dbReference>
<dbReference type="RefSeq" id="NP_079284.2">
    <molecule id="Q6UY14-2"/>
    <property type="nucleotide sequence ID" value="NM_025008.5"/>
</dbReference>
<dbReference type="RefSeq" id="XP_011507950.1">
    <molecule id="Q6UY14-3"/>
    <property type="nucleotide sequence ID" value="XM_011509648.4"/>
</dbReference>
<dbReference type="RefSeq" id="XP_016856995.1">
    <molecule id="Q6UY14-3"/>
    <property type="nucleotide sequence ID" value="XM_017001506.3"/>
</dbReference>
<dbReference type="RefSeq" id="XP_047278776.1">
    <molecule id="Q6UY14-3"/>
    <property type="nucleotide sequence ID" value="XM_047422820.1"/>
</dbReference>
<dbReference type="RefSeq" id="XP_047278779.1">
    <molecule id="Q6UY14-3"/>
    <property type="nucleotide sequence ID" value="XM_047422823.1"/>
</dbReference>
<dbReference type="RefSeq" id="XP_047278780.1">
    <molecule id="Q6UY14-3"/>
    <property type="nucleotide sequence ID" value="XM_047422824.1"/>
</dbReference>
<dbReference type="RefSeq" id="XP_047278786.1">
    <molecule id="Q6UY14-1"/>
    <property type="nucleotide sequence ID" value="XM_047422830.1"/>
</dbReference>
<dbReference type="RefSeq" id="XP_047278788.1">
    <molecule id="Q6UY14-1"/>
    <property type="nucleotide sequence ID" value="XM_047422832.1"/>
</dbReference>
<dbReference type="SMR" id="Q6UY14"/>
<dbReference type="BioGRID" id="120002">
    <property type="interactions" value="218"/>
</dbReference>
<dbReference type="FunCoup" id="Q6UY14">
    <property type="interactions" value="37"/>
</dbReference>
<dbReference type="IntAct" id="Q6UY14">
    <property type="interactions" value="235"/>
</dbReference>
<dbReference type="MINT" id="Q6UY14"/>
<dbReference type="STRING" id="9606.ENSP00000358035"/>
<dbReference type="GlyConnect" id="991">
    <property type="glycosylation" value="2 N-Linked glycans (1 site)"/>
</dbReference>
<dbReference type="GlyCosmos" id="Q6UY14">
    <property type="glycosylation" value="14 sites, 5 glycans"/>
</dbReference>
<dbReference type="GlyGen" id="Q6UY14">
    <property type="glycosylation" value="19 sites, 16 N-linked glycans (3 sites), 4 O-linked glycans (14 sites)"/>
</dbReference>
<dbReference type="iPTMnet" id="Q6UY14"/>
<dbReference type="PhosphoSitePlus" id="Q6UY14"/>
<dbReference type="BioMuta" id="ADAMTSL4"/>
<dbReference type="DMDM" id="118573317"/>
<dbReference type="MassIVE" id="Q6UY14"/>
<dbReference type="PaxDb" id="9606-ENSP00000358035"/>
<dbReference type="PeptideAtlas" id="Q6UY14"/>
<dbReference type="ProteomicsDB" id="30475"/>
<dbReference type="ProteomicsDB" id="67693">
    <molecule id="Q6UY14-1"/>
</dbReference>
<dbReference type="ProteomicsDB" id="67694">
    <molecule id="Q6UY14-2"/>
</dbReference>
<dbReference type="Antibodypedia" id="1665">
    <property type="antibodies" value="99 antibodies from 20 providers"/>
</dbReference>
<dbReference type="DNASU" id="54507"/>
<dbReference type="Ensembl" id="ENST00000271643.9">
    <molecule id="Q6UY14-1"/>
    <property type="protein sequence ID" value="ENSP00000271643.4"/>
    <property type="gene ID" value="ENSG00000143382.16"/>
</dbReference>
<dbReference type="Ensembl" id="ENST00000369038.6">
    <molecule id="Q6UY14-1"/>
    <property type="protein sequence ID" value="ENSP00000358034.2"/>
    <property type="gene ID" value="ENSG00000143382.16"/>
</dbReference>
<dbReference type="Ensembl" id="ENST00000369039.9">
    <molecule id="Q6UY14-3"/>
    <property type="protein sequence ID" value="ENSP00000358035.5"/>
    <property type="gene ID" value="ENSG00000143382.16"/>
</dbReference>
<dbReference type="Ensembl" id="ENST00000369041.9">
    <molecule id="Q6UY14-2"/>
    <property type="protein sequence ID" value="ENSP00000358037.5"/>
    <property type="gene ID" value="ENSG00000143382.16"/>
</dbReference>
<dbReference type="Ensembl" id="ENST00000674043.1">
    <molecule id="Q6UY14-3"/>
    <property type="protein sequence ID" value="ENSP00000501295.1"/>
    <property type="gene ID" value="ENSG00000143382.16"/>
</dbReference>
<dbReference type="GeneID" id="54507"/>
<dbReference type="KEGG" id="hsa:54507"/>
<dbReference type="MANE-Select" id="ENST00000271643.9">
    <property type="protein sequence ID" value="ENSP00000271643.4"/>
    <property type="RefSeq nucleotide sequence ID" value="NM_019032.6"/>
    <property type="RefSeq protein sequence ID" value="NP_061905.2"/>
</dbReference>
<dbReference type="UCSC" id="uc001euw.5">
    <molecule id="Q6UY14-1"/>
    <property type="organism name" value="human"/>
</dbReference>
<dbReference type="AGR" id="HGNC:19706"/>
<dbReference type="CTD" id="54507"/>
<dbReference type="DisGeNET" id="54507"/>
<dbReference type="GeneCards" id="ADAMTSL4"/>
<dbReference type="GeneReviews" id="ADAMTSL4"/>
<dbReference type="HGNC" id="HGNC:19706">
    <property type="gene designation" value="ADAMTSL4"/>
</dbReference>
<dbReference type="HPA" id="ENSG00000143382">
    <property type="expression patterns" value="Low tissue specificity"/>
</dbReference>
<dbReference type="MalaCards" id="ADAMTSL4"/>
<dbReference type="MIM" id="225100">
    <property type="type" value="phenotype"/>
</dbReference>
<dbReference type="MIM" id="225200">
    <property type="type" value="phenotype"/>
</dbReference>
<dbReference type="MIM" id="610113">
    <property type="type" value="gene"/>
</dbReference>
<dbReference type="neXtProt" id="NX_Q6UY14"/>
<dbReference type="OpenTargets" id="ENSG00000143382"/>
<dbReference type="Orphanet" id="1885">
    <property type="disease" value="Isolated ectopia lentis"/>
</dbReference>
<dbReference type="PharmGKB" id="PA134879921"/>
<dbReference type="VEuPathDB" id="HostDB:ENSG00000143382"/>
<dbReference type="eggNOG" id="KOG3538">
    <property type="taxonomic scope" value="Eukaryota"/>
</dbReference>
<dbReference type="eggNOG" id="KOG4597">
    <property type="taxonomic scope" value="Eukaryota"/>
</dbReference>
<dbReference type="GeneTree" id="ENSGT00940000161136"/>
<dbReference type="HOGENOM" id="CLU_000660_6_0_1"/>
<dbReference type="InParanoid" id="Q6UY14"/>
<dbReference type="OMA" id="SHWEVRT"/>
<dbReference type="OrthoDB" id="10062690at2759"/>
<dbReference type="PAN-GO" id="Q6UY14">
    <property type="GO annotations" value="0 GO annotations based on evolutionary models"/>
</dbReference>
<dbReference type="PhylomeDB" id="Q6UY14"/>
<dbReference type="TreeFam" id="TF316874"/>
<dbReference type="PathwayCommons" id="Q6UY14"/>
<dbReference type="Reactome" id="R-HSA-5083635">
    <property type="pathway name" value="Defective B3GALTL causes PpS"/>
</dbReference>
<dbReference type="Reactome" id="R-HSA-5173214">
    <property type="pathway name" value="O-glycosylation of TSR domain-containing proteins"/>
</dbReference>
<dbReference type="SignaLink" id="Q6UY14"/>
<dbReference type="BioGRID-ORCS" id="54507">
    <property type="hits" value="54 hits in 1158 CRISPR screens"/>
</dbReference>
<dbReference type="ChiTaRS" id="ADAMTSL4">
    <property type="organism name" value="human"/>
</dbReference>
<dbReference type="GeneWiki" id="ADAMTSL4"/>
<dbReference type="GenomeRNAi" id="54507"/>
<dbReference type="Pharos" id="Q6UY14">
    <property type="development level" value="Tbio"/>
</dbReference>
<dbReference type="PRO" id="PR:Q6UY14"/>
<dbReference type="Proteomes" id="UP000005640">
    <property type="component" value="Chromosome 1"/>
</dbReference>
<dbReference type="RNAct" id="Q6UY14">
    <property type="molecule type" value="protein"/>
</dbReference>
<dbReference type="Bgee" id="ENSG00000143382">
    <property type="expression patterns" value="Expressed in decidua and 138 other cell types or tissues"/>
</dbReference>
<dbReference type="ExpressionAtlas" id="Q6UY14">
    <property type="expression patterns" value="baseline and differential"/>
</dbReference>
<dbReference type="GO" id="GO:0062023">
    <property type="term" value="C:collagen-containing extracellular matrix"/>
    <property type="evidence" value="ECO:0007005"/>
    <property type="project" value="BHF-UCL"/>
</dbReference>
<dbReference type="GO" id="GO:0005788">
    <property type="term" value="C:endoplasmic reticulum lumen"/>
    <property type="evidence" value="ECO:0000304"/>
    <property type="project" value="Reactome"/>
</dbReference>
<dbReference type="GO" id="GO:0005576">
    <property type="term" value="C:extracellular region"/>
    <property type="evidence" value="ECO:0007669"/>
    <property type="project" value="UniProtKB-KW"/>
</dbReference>
<dbReference type="GO" id="GO:0005614">
    <property type="term" value="C:interstitial matrix"/>
    <property type="evidence" value="ECO:0007669"/>
    <property type="project" value="Ensembl"/>
</dbReference>
<dbReference type="GO" id="GO:0042802">
    <property type="term" value="F:identical protein binding"/>
    <property type="evidence" value="ECO:0000353"/>
    <property type="project" value="IntAct"/>
</dbReference>
<dbReference type="GO" id="GO:0002020">
    <property type="term" value="F:protease binding"/>
    <property type="evidence" value="ECO:0000353"/>
    <property type="project" value="UniProtKB"/>
</dbReference>
<dbReference type="GO" id="GO:0006915">
    <property type="term" value="P:apoptotic process"/>
    <property type="evidence" value="ECO:0007669"/>
    <property type="project" value="UniProtKB-KW"/>
</dbReference>
<dbReference type="GO" id="GO:0002064">
    <property type="term" value="P:epithelial cell development"/>
    <property type="evidence" value="ECO:0007669"/>
    <property type="project" value="Ensembl"/>
</dbReference>
<dbReference type="GO" id="GO:0030198">
    <property type="term" value="P:extracellular matrix organization"/>
    <property type="evidence" value="ECO:0007669"/>
    <property type="project" value="Ensembl"/>
</dbReference>
<dbReference type="GO" id="GO:0070285">
    <property type="term" value="P:pigment cell development"/>
    <property type="evidence" value="ECO:0007669"/>
    <property type="project" value="Ensembl"/>
</dbReference>
<dbReference type="GO" id="GO:0043065">
    <property type="term" value="P:positive regulation of apoptotic process"/>
    <property type="evidence" value="ECO:0000314"/>
    <property type="project" value="UniProtKB"/>
</dbReference>
<dbReference type="FunFam" id="2.60.120.830:FF:000001">
    <property type="entry name" value="A disintegrin and metalloproteinase with thrombospondin motifs 1"/>
    <property type="match status" value="1"/>
</dbReference>
<dbReference type="FunFam" id="2.20.100.10:FF:000005">
    <property type="entry name" value="ADAM metallopeptidase with thrombospondin type 1 motif 9"/>
    <property type="match status" value="1"/>
</dbReference>
<dbReference type="FunFam" id="2.20.100.10:FF:000085">
    <property type="entry name" value="ADAMTS like 4"/>
    <property type="match status" value="1"/>
</dbReference>
<dbReference type="FunFam" id="2.20.100.10:FF:000111">
    <property type="entry name" value="ADAMTS-like protein 4 isoform X1"/>
    <property type="match status" value="1"/>
</dbReference>
<dbReference type="FunFam" id="2.20.100.10:FF:000023">
    <property type="entry name" value="Thrombospondin type-1 domain-containing protein 4"/>
    <property type="match status" value="1"/>
</dbReference>
<dbReference type="FunFam" id="2.20.100.10:FF:000039">
    <property type="entry name" value="thrombospondin type-1 domain-containing protein 4"/>
    <property type="match status" value="1"/>
</dbReference>
<dbReference type="Gene3D" id="2.60.120.830">
    <property type="match status" value="1"/>
</dbReference>
<dbReference type="Gene3D" id="2.20.100.10">
    <property type="entry name" value="Thrombospondin type-1 (TSP1) repeat"/>
    <property type="match status" value="6"/>
</dbReference>
<dbReference type="InterPro" id="IPR050439">
    <property type="entry name" value="ADAMTS_ADAMTS-like"/>
</dbReference>
<dbReference type="InterPro" id="IPR045371">
    <property type="entry name" value="ADAMTS_CR_3"/>
</dbReference>
<dbReference type="InterPro" id="IPR010294">
    <property type="entry name" value="ADAMTS_spacer1"/>
</dbReference>
<dbReference type="InterPro" id="IPR010909">
    <property type="entry name" value="PLAC"/>
</dbReference>
<dbReference type="InterPro" id="IPR000884">
    <property type="entry name" value="TSP1_rpt"/>
</dbReference>
<dbReference type="InterPro" id="IPR036383">
    <property type="entry name" value="TSP1_rpt_sf"/>
</dbReference>
<dbReference type="PANTHER" id="PTHR13723">
    <property type="entry name" value="ADAMTS A DISINTEGRIN AND METALLOPROTEASE WITH THROMBOSPONDIN MOTIFS PROTEASE"/>
    <property type="match status" value="1"/>
</dbReference>
<dbReference type="PANTHER" id="PTHR13723:SF144">
    <property type="entry name" value="ADAMTS-LIKE PROTEIN 4"/>
    <property type="match status" value="1"/>
</dbReference>
<dbReference type="Pfam" id="PF19236">
    <property type="entry name" value="ADAMTS_CR_3"/>
    <property type="match status" value="1"/>
</dbReference>
<dbReference type="Pfam" id="PF05986">
    <property type="entry name" value="ADAMTS_spacer1"/>
    <property type="match status" value="1"/>
</dbReference>
<dbReference type="Pfam" id="PF08686">
    <property type="entry name" value="PLAC"/>
    <property type="match status" value="1"/>
</dbReference>
<dbReference type="Pfam" id="PF19030">
    <property type="entry name" value="TSP1_ADAMTS"/>
    <property type="match status" value="5"/>
</dbReference>
<dbReference type="Pfam" id="PF00090">
    <property type="entry name" value="TSP_1"/>
    <property type="match status" value="1"/>
</dbReference>
<dbReference type="SMART" id="SM00209">
    <property type="entry name" value="TSP1"/>
    <property type="match status" value="6"/>
</dbReference>
<dbReference type="SUPFAM" id="SSF82895">
    <property type="entry name" value="TSP-1 type 1 repeat"/>
    <property type="match status" value="6"/>
</dbReference>
<dbReference type="PROSITE" id="PS50900">
    <property type="entry name" value="PLAC"/>
    <property type="match status" value="1"/>
</dbReference>
<dbReference type="PROSITE" id="PS50092">
    <property type="entry name" value="TSP1"/>
    <property type="match status" value="6"/>
</dbReference>
<evidence type="ECO:0000250" key="1"/>
<evidence type="ECO:0000255" key="2"/>
<evidence type="ECO:0000255" key="3">
    <source>
        <dbReference type="PROSITE-ProRule" id="PRU00210"/>
    </source>
</evidence>
<evidence type="ECO:0000255" key="4">
    <source>
        <dbReference type="PROSITE-ProRule" id="PRU00233"/>
    </source>
</evidence>
<evidence type="ECO:0000256" key="5">
    <source>
        <dbReference type="SAM" id="MobiDB-lite"/>
    </source>
</evidence>
<evidence type="ECO:0000269" key="6">
    <source>
    </source>
</evidence>
<evidence type="ECO:0000269" key="7">
    <source>
    </source>
</evidence>
<evidence type="ECO:0000269" key="8">
    <source>
    </source>
</evidence>
<evidence type="ECO:0000269" key="9">
    <source>
    </source>
</evidence>
<evidence type="ECO:0000269" key="10">
    <source>
    </source>
</evidence>
<evidence type="ECO:0000269" key="11">
    <source>
    </source>
</evidence>
<evidence type="ECO:0000269" key="12">
    <source>
    </source>
</evidence>
<evidence type="ECO:0000269" key="13">
    <source>
    </source>
</evidence>
<evidence type="ECO:0000269" key="14">
    <source>
    </source>
</evidence>
<evidence type="ECO:0000303" key="15">
    <source>
    </source>
</evidence>
<evidence type="ECO:0000303" key="16">
    <source>
    </source>
</evidence>
<evidence type="ECO:0000305" key="17"/>
<evidence type="ECO:0000312" key="18">
    <source>
        <dbReference type="EMBL" id="AAH71852.1"/>
    </source>
</evidence>
<evidence type="ECO:0000312" key="19">
    <source>
        <dbReference type="EMBL" id="AAQ88489.1"/>
    </source>
</evidence>
<evidence type="ECO:0000312" key="20">
    <source>
        <dbReference type="EMBL" id="CAI15499.1"/>
    </source>
</evidence>
<organism>
    <name type="scientific">Homo sapiens</name>
    <name type="common">Human</name>
    <dbReference type="NCBI Taxonomy" id="9606"/>
    <lineage>
        <taxon>Eukaryota</taxon>
        <taxon>Metazoa</taxon>
        <taxon>Chordata</taxon>
        <taxon>Craniata</taxon>
        <taxon>Vertebrata</taxon>
        <taxon>Euteleostomi</taxon>
        <taxon>Mammalia</taxon>
        <taxon>Eutheria</taxon>
        <taxon>Euarchontoglires</taxon>
        <taxon>Primates</taxon>
        <taxon>Haplorrhini</taxon>
        <taxon>Catarrhini</taxon>
        <taxon>Hominidae</taxon>
        <taxon>Homo</taxon>
    </lineage>
</organism>
<comment type="function">
    <text evidence="10 14">Positive regulation of apoptosis. May facilitate FBN1 microfibril biogenesis.</text>
</comment>
<comment type="subunit">
    <text evidence="10 14">Interacts with CTSB. Interacts with FBN1.</text>
</comment>
<comment type="interaction">
    <interactant intactId="EBI-742002">
        <id>Q6UY14</id>
    </interactant>
    <interactant intactId="EBI-715062">
        <id>P07858</id>
        <label>CTSB</label>
    </interactant>
    <organismsDiffer>false</organismsDiffer>
    <experiments>3</experiments>
</comment>
<comment type="interaction">
    <interactant intactId="EBI-742002">
        <id>Q6UY14</id>
    </interactant>
    <interactant intactId="EBI-749295">
        <id>O75716</id>
        <label>STK16</label>
    </interactant>
    <organismsDiffer>false</organismsDiffer>
    <experiments>3</experiments>
</comment>
<comment type="interaction">
    <interactant intactId="EBI-742002">
        <id>Q6UY14</id>
    </interactant>
    <interactant intactId="EBI-3957603">
        <id>P09022</id>
        <label>Hoxa1</label>
    </interactant>
    <organismsDiffer>true</organismsDiffer>
    <experiments>3</experiments>
</comment>
<comment type="interaction">
    <interactant intactId="EBI-742002">
        <id>Q6UY14</id>
    </interactant>
    <interactant intactId="EBI-642911">
        <id>P28301</id>
        <label>Lox</label>
    </interactant>
    <organismsDiffer>true</organismsDiffer>
    <experiments>2</experiments>
</comment>
<comment type="interaction">
    <interactant intactId="EBI-10173507">
        <id>Q6UY14-3</id>
    </interactant>
    <interactant intactId="EBI-12006944">
        <id>O43184-4</id>
        <label>ADAM12</label>
    </interactant>
    <organismsDiffer>false</organismsDiffer>
    <experiments>3</experiments>
</comment>
<comment type="interaction">
    <interactant intactId="EBI-10173507">
        <id>Q6UY14-3</id>
    </interactant>
    <interactant intactId="EBI-10173507">
        <id>Q6UY14-3</id>
        <label>ADAMTSL4</label>
    </interactant>
    <organismsDiffer>false</organismsDiffer>
    <experiments>3</experiments>
</comment>
<comment type="interaction">
    <interactant intactId="EBI-10173507">
        <id>Q6UY14-3</id>
    </interactant>
    <interactant intactId="EBI-10254938">
        <id>Q6ZMM2-2</id>
        <label>ADAMTSL5</label>
    </interactant>
    <organismsDiffer>false</organismsDiffer>
    <experiments>3</experiments>
</comment>
<comment type="interaction">
    <interactant intactId="EBI-10173507">
        <id>Q6UY14-3</id>
    </interactant>
    <interactant intactId="EBI-296087">
        <id>P31749</id>
        <label>AKT1</label>
    </interactant>
    <organismsDiffer>false</organismsDiffer>
    <experiments>3</experiments>
</comment>
<comment type="interaction">
    <interactant intactId="EBI-10173507">
        <id>Q6UY14-3</id>
    </interactant>
    <interactant intactId="EBI-1211484">
        <id>P05187</id>
        <label>ALPP</label>
    </interactant>
    <organismsDiffer>false</organismsDiffer>
    <experiments>3</experiments>
</comment>
<comment type="interaction">
    <interactant intactId="EBI-10173507">
        <id>Q6UY14-3</id>
    </interactant>
    <interactant intactId="EBI-8583355">
        <id>Q9Y4X0</id>
        <label>AMMECR1</label>
    </interactant>
    <organismsDiffer>false</organismsDiffer>
    <experiments>3</experiments>
</comment>
<comment type="interaction">
    <interactant intactId="EBI-10173507">
        <id>Q6UY14-3</id>
    </interactant>
    <interactant intactId="EBI-12823597">
        <id>Q9Y4X0-3</id>
        <label>AMMECR1</label>
    </interactant>
    <organismsDiffer>false</organismsDiffer>
    <experiments>3</experiments>
</comment>
<comment type="interaction">
    <interactant intactId="EBI-10173507">
        <id>Q6UY14-3</id>
    </interactant>
    <interactant intactId="EBI-10175904">
        <id>B3KTP4</id>
        <label>ApoL6</label>
    </interactant>
    <organismsDiffer>false</organismsDiffer>
    <experiments>3</experiments>
</comment>
<comment type="interaction">
    <interactant intactId="EBI-10173507">
        <id>Q6UY14-3</id>
    </interactant>
    <interactant intactId="EBI-11574440">
        <id>Q9BWW8</id>
        <label>APOL6</label>
    </interactant>
    <organismsDiffer>false</organismsDiffer>
    <experiments>3</experiments>
</comment>
<comment type="interaction">
    <interactant intactId="EBI-10173507">
        <id>Q6UY14-3</id>
    </interactant>
    <interactant intactId="EBI-1993677">
        <id>Q9BZE9</id>
        <label>ASPSCR1</label>
    </interactant>
    <organismsDiffer>false</organismsDiffer>
    <experiments>3</experiments>
</comment>
<comment type="interaction">
    <interactant intactId="EBI-10173507">
        <id>Q6UY14-3</id>
    </interactant>
    <interactant intactId="EBI-12006308">
        <id>Q7Z3C6-3</id>
        <label>ATG9A</label>
    </interactant>
    <organismsDiffer>false</organismsDiffer>
    <experiments>3</experiments>
</comment>
<comment type="interaction">
    <interactant intactId="EBI-10173507">
        <id>Q6UY14-3</id>
    </interactant>
    <interactant intactId="EBI-946046">
        <id>P54252</id>
        <label>ATXN3</label>
    </interactant>
    <organismsDiffer>false</organismsDiffer>
    <experiments>3</experiments>
</comment>
<comment type="interaction">
    <interactant intactId="EBI-10173507">
        <id>Q6UY14-3</id>
    </interactant>
    <interactant intactId="EBI-2949658">
        <id>O95429</id>
        <label>BAG4</label>
    </interactant>
    <organismsDiffer>false</organismsDiffer>
    <experiments>3</experiments>
</comment>
<comment type="interaction">
    <interactant intactId="EBI-10173507">
        <id>Q6UY14-3</id>
    </interactant>
    <interactant intactId="EBI-11977289">
        <id>Q9H503-2</id>
        <label>BANF2</label>
    </interactant>
    <organismsDiffer>false</organismsDiffer>
    <experiments>3</experiments>
</comment>
<comment type="interaction">
    <interactant intactId="EBI-10173507">
        <id>Q6UY14-3</id>
    </interactant>
    <interactant intactId="EBI-12275524">
        <id>P23560-2</id>
        <label>BDNF</label>
    </interactant>
    <organismsDiffer>false</organismsDiffer>
    <experiments>3</experiments>
</comment>
<comment type="interaction">
    <interactant intactId="EBI-10173507">
        <id>Q6UY14-3</id>
    </interactant>
    <interactant intactId="EBI-12006120">
        <id>A0A087WZT3</id>
        <label>BOLA2-SMG1P6</label>
    </interactant>
    <organismsDiffer>false</organismsDiffer>
    <experiments>3</experiments>
</comment>
<comment type="interaction">
    <interactant intactId="EBI-10173507">
        <id>Q6UY14-3</id>
    </interactant>
    <interactant intactId="EBI-12040255">
        <id>Q0VDD7-2</id>
        <label>BRME1</label>
    </interactant>
    <organismsDiffer>false</organismsDiffer>
    <experiments>3</experiments>
</comment>
<comment type="interaction">
    <interactant intactId="EBI-10173507">
        <id>Q6UY14-3</id>
    </interactant>
    <interactant intactId="EBI-718729">
        <id>P55212</id>
        <label>CASP6</label>
    </interactant>
    <organismsDiffer>false</organismsDiffer>
    <experiments>3</experiments>
</comment>
<comment type="interaction">
    <interactant intactId="EBI-10173507">
        <id>Q6UY14-3</id>
    </interactant>
    <interactant intactId="EBI-744545">
        <id>Q8NEC5</id>
        <label>CATSPER1</label>
    </interactant>
    <organismsDiffer>false</organismsDiffer>
    <experiments>3</experiments>
</comment>
<comment type="interaction">
    <interactant intactId="EBI-10173507">
        <id>Q6UY14-3</id>
    </interactant>
    <interactant intactId="EBI-78176">
        <id>Q13185</id>
        <label>CBX3</label>
    </interactant>
    <organismsDiffer>false</organismsDiffer>
    <experiments>3</experiments>
</comment>
<comment type="interaction">
    <interactant intactId="EBI-10173507">
        <id>Q6UY14-3</id>
    </interactant>
    <interactant intactId="EBI-6624398">
        <id>P06307</id>
        <label>CCK</label>
    </interactant>
    <organismsDiffer>false</organismsDiffer>
    <experiments>3</experiments>
</comment>
<comment type="interaction">
    <interactant intactId="EBI-10173507">
        <id>Q6UY14-3</id>
    </interactant>
    <interactant intactId="EBI-749051">
        <id>Q8IYR0</id>
        <label>CFAP206</label>
    </interactant>
    <organismsDiffer>false</organismsDiffer>
    <experiments>6</experiments>
</comment>
<comment type="interaction">
    <interactant intactId="EBI-10173507">
        <id>Q6UY14-3</id>
    </interactant>
    <interactant intactId="EBI-2321769">
        <id>Q9Y6H1</id>
        <label>CHCHD2</label>
    </interactant>
    <organismsDiffer>false</organismsDiffer>
    <experiments>3</experiments>
</comment>
<comment type="interaction">
    <interactant intactId="EBI-10173507">
        <id>Q6UY14-3</id>
    </interactant>
    <interactant intactId="EBI-2555370">
        <id>Q8IWX8</id>
        <label>CHERP</label>
    </interactant>
    <organismsDiffer>false</organismsDiffer>
    <experiments>3</experiments>
</comment>
<comment type="interaction">
    <interactant intactId="EBI-10173507">
        <id>Q6UY14-3</id>
    </interactant>
    <interactant intactId="EBI-741528">
        <id>Q9UKJ5</id>
        <label>CHIC2</label>
    </interactant>
    <organismsDiffer>false</organismsDiffer>
    <experiments>3</experiments>
</comment>
<comment type="interaction">
    <interactant intactId="EBI-10173507">
        <id>Q6UY14-3</id>
    </interactant>
    <interactant intactId="EBI-947551">
        <id>Q9H2X0</id>
        <label>CHRD</label>
    </interactant>
    <organismsDiffer>false</organismsDiffer>
    <experiments>3</experiments>
</comment>
<comment type="interaction">
    <interactant intactId="EBI-10173507">
        <id>Q6UY14-3</id>
    </interactant>
    <interactant intactId="EBI-7132379">
        <id>P43681</id>
        <label>CHRNA4</label>
    </interactant>
    <organismsDiffer>false</organismsDiffer>
    <experiments>3</experiments>
</comment>
<comment type="interaction">
    <interactant intactId="EBI-10173507">
        <id>Q6UY14-3</id>
    </interactant>
    <interactant intactId="EBI-11979451">
        <id>P07510-2</id>
        <label>CHRNG</label>
    </interactant>
    <organismsDiffer>false</organismsDiffer>
    <experiments>3</experiments>
</comment>
<comment type="interaction">
    <interactant intactId="EBI-10173507">
        <id>Q6UY14-3</id>
    </interactant>
    <interactant intactId="EBI-10173491">
        <id>A5D8T8</id>
        <label>CLEC18A</label>
    </interactant>
    <organismsDiffer>false</organismsDiffer>
    <experiments>3</experiments>
</comment>
<comment type="interaction">
    <interactant intactId="EBI-10173507">
        <id>Q6UY14-3</id>
    </interactant>
    <interactant intactId="EBI-744841">
        <id>Q9UBL6</id>
        <label>CPNE7</label>
    </interactant>
    <organismsDiffer>false</organismsDiffer>
    <experiments>3</experiments>
</comment>
<comment type="interaction">
    <interactant intactId="EBI-10173507">
        <id>Q6UY14-3</id>
    </interactant>
    <interactant intactId="EBI-12012272">
        <id>Q9UBL6-2</id>
        <label>CPNE7</label>
    </interactant>
    <organismsDiffer>false</organismsDiffer>
    <experiments>3</experiments>
</comment>
<comment type="interaction">
    <interactant intactId="EBI-10173507">
        <id>Q6UY14-3</id>
    </interactant>
    <interactant intactId="EBI-10192698">
        <id>Q02930-3</id>
        <label>CREB5</label>
    </interactant>
    <organismsDiffer>false</organismsDiffer>
    <experiments>6</experiments>
</comment>
<comment type="interaction">
    <interactant intactId="EBI-10173507">
        <id>Q6UY14-3</id>
    </interactant>
    <interactant intactId="EBI-739060">
        <id>P02511</id>
        <label>CRYAB</label>
    </interactant>
    <organismsDiffer>false</organismsDiffer>
    <experiments>3</experiments>
</comment>
<comment type="interaction">
    <interactant intactId="EBI-10173507">
        <id>Q6UY14-3</id>
    </interactant>
    <interactant intactId="EBI-8832659">
        <id>P09228</id>
        <label>CST2</label>
    </interactant>
    <organismsDiffer>false</organismsDiffer>
    <experiments>3</experiments>
</comment>
<comment type="interaction">
    <interactant intactId="EBI-10173507">
        <id>Q6UY14-3</id>
    </interactant>
    <interactant intactId="EBI-8633740">
        <id>Q96SQ9</id>
        <label>CYP2S1</label>
    </interactant>
    <organismsDiffer>false</organismsDiffer>
    <experiments>3</experiments>
</comment>
<comment type="interaction">
    <interactant intactId="EBI-10173507">
        <id>Q6UY14-3</id>
    </interactant>
    <interactant intactId="EBI-3867333">
        <id>A8MQ03</id>
        <label>CYSRT1</label>
    </interactant>
    <organismsDiffer>false</organismsDiffer>
    <experiments>3</experiments>
</comment>
<comment type="interaction">
    <interactant intactId="EBI-10173507">
        <id>Q6UY14-3</id>
    </interactant>
    <interactant intactId="EBI-742953">
        <id>Q9BY27</id>
        <label>DGCR6L</label>
    </interactant>
    <organismsDiffer>false</organismsDiffer>
    <experiments>3</experiments>
</comment>
<comment type="interaction">
    <interactant intactId="EBI-10173507">
        <id>Q6UY14-3</id>
    </interactant>
    <interactant intactId="EBI-10233719">
        <id>Q14689-6</id>
        <label>DIP2A</label>
    </interactant>
    <organismsDiffer>false</organismsDiffer>
    <experiments>3</experiments>
</comment>
<comment type="interaction">
    <interactant intactId="EBI-10173507">
        <id>Q6UY14-3</id>
    </interactant>
    <interactant intactId="EBI-10976677">
        <id>G5E9A7</id>
        <label>DMWD</label>
    </interactant>
    <organismsDiffer>false</organismsDiffer>
    <experiments>3</experiments>
</comment>
<comment type="interaction">
    <interactant intactId="EBI-10173507">
        <id>Q6UY14-3</id>
    </interactant>
    <interactant intactId="EBI-10294182">
        <id>Q96T75</id>
        <label>DSCR8</label>
    </interactant>
    <organismsDiffer>false</organismsDiffer>
    <experiments>3</experiments>
</comment>
<comment type="interaction">
    <interactant intactId="EBI-10173507">
        <id>Q6UY14-3</id>
    </interactant>
    <interactant intactId="EBI-743414">
        <id>O95967</id>
        <label>EFEMP2</label>
    </interactant>
    <organismsDiffer>false</organismsDiffer>
    <experiments>3</experiments>
</comment>
<comment type="interaction">
    <interactant intactId="EBI-10173507">
        <id>Q6UY14-3</id>
    </interactant>
    <interactant intactId="EBI-398610">
        <id>O60573</id>
        <label>EIF4E2</label>
    </interactant>
    <organismsDiffer>false</organismsDiffer>
    <experiments>3</experiments>
</comment>
<comment type="interaction">
    <interactant intactId="EBI-10173507">
        <id>Q6UY14-3</id>
    </interactant>
    <interactant intactId="EBI-946972">
        <id>Q9UM22</id>
        <label>EPDR1</label>
    </interactant>
    <organismsDiffer>false</organismsDiffer>
    <experiments>3</experiments>
</comment>
<comment type="interaction">
    <interactant intactId="EBI-10173507">
        <id>Q6UY14-3</id>
    </interactant>
    <interactant intactId="EBI-1183307">
        <id>P19447</id>
        <label>ERCC3</label>
    </interactant>
    <organismsDiffer>false</organismsDiffer>
    <experiments>3</experiments>
</comment>
<comment type="interaction">
    <interactant intactId="EBI-10173507">
        <id>Q6UY14-3</id>
    </interactant>
    <interactant intactId="EBI-371876">
        <id>Q9NQT4</id>
        <label>EXOSC5</label>
    </interactant>
    <organismsDiffer>false</organismsDiffer>
    <experiments>3</experiments>
</comment>
<comment type="interaction">
    <interactant intactId="EBI-10173507">
        <id>Q6UY14-3</id>
    </interactant>
    <interactant intactId="EBI-4397076">
        <id>P16930</id>
        <label>FAH</label>
    </interactant>
    <organismsDiffer>false</organismsDiffer>
    <experiments>3</experiments>
</comment>
<comment type="interaction">
    <interactant intactId="EBI-10173507">
        <id>Q6UY14-3</id>
    </interactant>
    <interactant intactId="EBI-741626">
        <id>Q9H5Z6</id>
        <label>FAM124B</label>
    </interactant>
    <organismsDiffer>false</organismsDiffer>
    <experiments>3</experiments>
</comment>
<comment type="interaction">
    <interactant intactId="EBI-10173507">
        <id>Q6UY14-3</id>
    </interactant>
    <interactant intactId="EBI-2513774">
        <id>O95363</id>
        <label>FARS2</label>
    </interactant>
    <organismsDiffer>false</organismsDiffer>
    <experiments>3</experiments>
</comment>
<comment type="interaction">
    <interactant intactId="EBI-10173507">
        <id>Q6UY14-3</id>
    </interactant>
    <interactant intactId="EBI-2510157">
        <id>Q96EF6</id>
        <label>FBXO17</label>
    </interactant>
    <organismsDiffer>false</organismsDiffer>
    <experiments>3</experiments>
</comment>
<comment type="interaction">
    <interactant intactId="EBI-10173507">
        <id>Q6UY14-3</id>
    </interactant>
    <interactant intactId="EBI-741068">
        <id>Q969U6</id>
        <label>FBXW5</label>
    </interactant>
    <organismsDiffer>false</organismsDiffer>
    <experiments>6</experiments>
</comment>
<comment type="interaction">
    <interactant intactId="EBI-10173507">
        <id>Q6UY14-3</id>
    </interactant>
    <interactant intactId="EBI-348399">
        <id>P22607</id>
        <label>FGFR3</label>
    </interactant>
    <organismsDiffer>false</organismsDiffer>
    <experiments>3</experiments>
</comment>
<comment type="interaction">
    <interactant intactId="EBI-10173507">
        <id>Q6UY14-3</id>
    </interactant>
    <interactant intactId="EBI-6693977">
        <id>P68106</id>
        <label>FKBP1B</label>
    </interactant>
    <organismsDiffer>false</organismsDiffer>
    <experiments>3</experiments>
</comment>
<comment type="interaction">
    <interactant intactId="EBI-10173507">
        <id>Q6UY14-3</id>
    </interactant>
    <interactant intactId="EBI-9641086">
        <id>P21333-2</id>
        <label>FLNA</label>
    </interactant>
    <organismsDiffer>false</organismsDiffer>
    <experiments>6</experiments>
</comment>
<comment type="interaction">
    <interactant intactId="EBI-10173507">
        <id>Q6UY14-3</id>
    </interactant>
    <interactant intactId="EBI-852851">
        <id>P01100</id>
        <label>FOS</label>
    </interactant>
    <organismsDiffer>false</organismsDiffer>
    <experiments>3</experiments>
</comment>
<comment type="interaction">
    <interactant intactId="EBI-10173507">
        <id>Q6UY14-3</id>
    </interactant>
    <interactant intactId="EBI-725515">
        <id>O43559</id>
        <label>FRS3</label>
    </interactant>
    <organismsDiffer>false</organismsDiffer>
    <experiments>3</experiments>
</comment>
<comment type="interaction">
    <interactant intactId="EBI-10173507">
        <id>Q6UY14-3</id>
    </interactant>
    <interactant intactId="EBI-354056">
        <id>P04406</id>
        <label>GAPDH</label>
    </interactant>
    <organismsDiffer>false</organismsDiffer>
    <experiments>3</experiments>
</comment>
<comment type="interaction">
    <interactant intactId="EBI-10173507">
        <id>Q6UY14-3</id>
    </interactant>
    <interactant intactId="EBI-2806671">
        <id>P23769</id>
        <label>GATA2</label>
    </interactant>
    <organismsDiffer>false</organismsDiffer>
    <experiments>3</experiments>
</comment>
<comment type="interaction">
    <interactant intactId="EBI-10173507">
        <id>Q6UY14-3</id>
    </interactant>
    <interactant intactId="EBI-2552594">
        <id>P50440</id>
        <label>GATM</label>
    </interactant>
    <organismsDiffer>false</organismsDiffer>
    <experiments>3</experiments>
</comment>
<comment type="interaction">
    <interactant intactId="EBI-10173507">
        <id>Q6UY14-3</id>
    </interactant>
    <interactant intactId="EBI-8588553">
        <id>P09681</id>
        <label>GIP</label>
    </interactant>
    <organismsDiffer>false</organismsDiffer>
    <experiments>3</experiments>
</comment>
<comment type="interaction">
    <interactant intactId="EBI-10173507">
        <id>Q6UY14-3</id>
    </interactant>
    <interactant intactId="EBI-748515">
        <id>Q8IVS8</id>
        <label>GLYCTK</label>
    </interactant>
    <organismsDiffer>false</organismsDiffer>
    <experiments>3</experiments>
</comment>
<comment type="interaction">
    <interactant intactId="EBI-10173507">
        <id>Q6UY14-3</id>
    </interactant>
    <interactant intactId="EBI-745707">
        <id>Q8NEA9</id>
        <label>GMCL2</label>
    </interactant>
    <organismsDiffer>false</organismsDiffer>
    <experiments>3</experiments>
</comment>
<comment type="interaction">
    <interactant intactId="EBI-10173507">
        <id>Q6UY14-3</id>
    </interactant>
    <interactant intactId="EBI-4291090">
        <id>Q9Y223</id>
        <label>GNE</label>
    </interactant>
    <organismsDiffer>false</organismsDiffer>
    <experiments>3</experiments>
</comment>
<comment type="interaction">
    <interactant intactId="EBI-10173507">
        <id>Q6UY14-3</id>
    </interactant>
    <interactant intactId="EBI-11975289">
        <id>Q9Y223-2</id>
        <label>GNE</label>
    </interactant>
    <organismsDiffer>false</organismsDiffer>
    <experiments>3</experiments>
</comment>
<comment type="interaction">
    <interactant intactId="EBI-10173507">
        <id>Q6UY14-3</id>
    </interactant>
    <interactant intactId="EBI-11427343">
        <id>Q9P2W3</id>
        <label>GNG13</label>
    </interactant>
    <organismsDiffer>false</organismsDiffer>
    <experiments>3</experiments>
</comment>
<comment type="interaction">
    <interactant intactId="EBI-10173507">
        <id>Q6UY14-3</id>
    </interactant>
    <interactant intactId="EBI-10181276">
        <id>Q0D2H9</id>
        <label>GOLGA8DP</label>
    </interactant>
    <organismsDiffer>false</organismsDiffer>
    <experiments>3</experiments>
</comment>
<comment type="interaction">
    <interactant intactId="EBI-10173507">
        <id>Q6UY14-3</id>
    </interactant>
    <interactant intactId="EBI-401755">
        <id>P62993</id>
        <label>GRB2</label>
    </interactant>
    <organismsDiffer>false</organismsDiffer>
    <experiments>3</experiments>
</comment>
<comment type="interaction">
    <interactant intactId="EBI-10173507">
        <id>Q6UY14-3</id>
    </interactant>
    <interactant intactId="EBI-8285963">
        <id>Q14957</id>
        <label>GRIN2C</label>
    </interactant>
    <organismsDiffer>false</organismsDiffer>
    <experiments>3</experiments>
</comment>
<comment type="interaction">
    <interactant intactId="EBI-10173507">
        <id>Q6UY14-3</id>
    </interactant>
    <interactant intactId="EBI-747754">
        <id>P28799</id>
        <label>GRN</label>
    </interactant>
    <organismsDiffer>false</organismsDiffer>
    <experiments>3</experiments>
</comment>
<comment type="interaction">
    <interactant intactId="EBI-10173507">
        <id>Q6UY14-3</id>
    </interactant>
    <interactant intactId="EBI-351506">
        <id>P06396</id>
        <label>GSN</label>
    </interactant>
    <organismsDiffer>false</organismsDiffer>
    <experiments>3</experiments>
</comment>
<comment type="interaction">
    <interactant intactId="EBI-10173507">
        <id>Q6UY14-3</id>
    </interactant>
    <interactant intactId="EBI-353467">
        <id>P09211</id>
        <label>GSTP1</label>
    </interactant>
    <organismsDiffer>false</organismsDiffer>
    <experiments>3</experiments>
</comment>
<comment type="interaction">
    <interactant intactId="EBI-10173507">
        <id>Q6UY14-3</id>
    </interactant>
    <interactant intactId="EBI-11978177">
        <id>Q96NT3-2</id>
        <label>GUCD1</label>
    </interactant>
    <organismsDiffer>false</organismsDiffer>
    <experiments>3</experiments>
</comment>
<comment type="interaction">
    <interactant intactId="EBI-10173507">
        <id>Q6UY14-3</id>
    </interactant>
    <interactant intactId="EBI-10180762">
        <id>V9HW60</id>
        <label>HEL-S-182mP</label>
    </interactant>
    <organismsDiffer>false</organismsDiffer>
    <experiments>3</experiments>
</comment>
<comment type="interaction">
    <interactant intactId="EBI-10173507">
        <id>Q6UY14-3</id>
    </interactant>
    <interactant intactId="EBI-5460660">
        <id>Q96MH2</id>
        <label>HEXIM2</label>
    </interactant>
    <organismsDiffer>false</organismsDiffer>
    <experiments>3</experiments>
</comment>
<comment type="interaction">
    <interactant intactId="EBI-10173507">
        <id>Q6UY14-3</id>
    </interactant>
    <interactant intactId="EBI-1039104">
        <id>P14210</id>
        <label>HGF</label>
    </interactant>
    <organismsDiffer>false</organismsDiffer>
    <experiments>3</experiments>
</comment>
<comment type="interaction">
    <interactant intactId="EBI-10173507">
        <id>Q6UY14-3</id>
    </interactant>
    <interactant intactId="EBI-740785">
        <id>P49639</id>
        <label>HOXA1</label>
    </interactant>
    <organismsDiffer>false</organismsDiffer>
    <experiments>10</experiments>
</comment>
<comment type="interaction">
    <interactant intactId="EBI-10173507">
        <id>Q6UY14-3</id>
    </interactant>
    <interactant intactId="EBI-1752118">
        <id>P31273</id>
        <label>HOXC8</label>
    </interactant>
    <organismsDiffer>false</organismsDiffer>
    <experiments>3</experiments>
</comment>
<comment type="interaction">
    <interactant intactId="EBI-10173507">
        <id>Q6UY14-3</id>
    </interactant>
    <interactant intactId="EBI-3918847">
        <id>Q9H2F3</id>
        <label>HSD3B7</label>
    </interactant>
    <organismsDiffer>false</organismsDiffer>
    <experiments>3</experiments>
</comment>
<comment type="interaction">
    <interactant intactId="EBI-10173507">
        <id>Q6UY14-3</id>
    </interactant>
    <interactant intactId="EBI-296047">
        <id>P07900</id>
        <label>HSP90AA1</label>
    </interactant>
    <organismsDiffer>false</organismsDiffer>
    <experiments>3</experiments>
</comment>
<comment type="interaction">
    <interactant intactId="EBI-10173507">
        <id>Q6UY14-3</id>
    </interactant>
    <interactant intactId="EBI-352682">
        <id>P04792</id>
        <label>HSPB1</label>
    </interactant>
    <organismsDiffer>false</organismsDiffer>
    <experiments>3</experiments>
</comment>
<comment type="interaction">
    <interactant intactId="EBI-10173507">
        <id>Q6UY14-3</id>
    </interactant>
    <interactant intactId="EBI-7090529">
        <id>P01308</id>
        <label>INS</label>
    </interactant>
    <organismsDiffer>false</organismsDiffer>
    <experiments>3</experiments>
</comment>
<comment type="interaction">
    <interactant intactId="EBI-10173507">
        <id>Q6UY14-3</id>
    </interactant>
    <interactant intactId="EBI-751911">
        <id>Q92551</id>
        <label>IP6K1</label>
    </interactant>
    <organismsDiffer>false</organismsDiffer>
    <experiments>3</experiments>
</comment>
<comment type="interaction">
    <interactant intactId="EBI-10173507">
        <id>Q6UY14-3</id>
    </interactant>
    <interactant intactId="EBI-300173">
        <id>P05107</id>
        <label>ITGB2</label>
    </interactant>
    <organismsDiffer>false</organismsDiffer>
    <experiments>3</experiments>
</comment>
<comment type="interaction">
    <interactant intactId="EBI-10173507">
        <id>Q6UY14-3</id>
    </interactant>
    <interactant intactId="EBI-11051601">
        <id>P16144-2</id>
        <label>ITGB4</label>
    </interactant>
    <organismsDiffer>false</organismsDiffer>
    <experiments>3</experiments>
</comment>
<comment type="interaction">
    <interactant intactId="EBI-10173507">
        <id>Q6UY14-3</id>
    </interactant>
    <interactant intactId="EBI-2510602">
        <id>Q15040</id>
        <label>JOSD1</label>
    </interactant>
    <organismsDiffer>false</organismsDiffer>
    <experiments>3</experiments>
</comment>
<comment type="interaction">
    <interactant intactId="EBI-10173507">
        <id>Q6UY14-3</id>
    </interactant>
    <interactant intactId="EBI-11954971">
        <id>Q96MP8-2</id>
        <label>KCTD7</label>
    </interactant>
    <organismsDiffer>false</organismsDiffer>
    <experiments>3</experiments>
</comment>
<comment type="interaction">
    <interactant intactId="EBI-10173507">
        <id>Q6UY14-3</id>
    </interactant>
    <interactant intactId="EBI-4397613">
        <id>Q7L273</id>
        <label>KCTD9</label>
    </interactant>
    <organismsDiffer>false</organismsDiffer>
    <experiments>3</experiments>
</comment>
<comment type="interaction">
    <interactant intactId="EBI-10173507">
        <id>Q6UY14-3</id>
    </interactant>
    <interactant intactId="EBI-10975473">
        <id>O60333-2</id>
        <label>KIF1B</label>
    </interactant>
    <organismsDiffer>false</organismsDiffer>
    <experiments>3</experiments>
</comment>
<comment type="interaction">
    <interactant intactId="EBI-10173507">
        <id>Q6UY14-3</id>
    </interactant>
    <interactant intactId="EBI-6426443">
        <id>Q2WGJ6</id>
        <label>KLHL38</label>
    </interactant>
    <organismsDiffer>false</organismsDiffer>
    <experiments>3</experiments>
</comment>
<comment type="interaction">
    <interactant intactId="EBI-10173507">
        <id>Q6UY14-3</id>
    </interactant>
    <interactant intactId="EBI-11959885">
        <id>Q07627</id>
        <label>KRTAP1-1</label>
    </interactant>
    <organismsDiffer>false</organismsDiffer>
    <experiments>3</experiments>
</comment>
<comment type="interaction">
    <interactant intactId="EBI-10173507">
        <id>Q6UY14-3</id>
    </interactant>
    <interactant intactId="EBI-11741292">
        <id>Q9BYS1</id>
        <label>KRTAP1-5</label>
    </interactant>
    <organismsDiffer>false</organismsDiffer>
    <experiments>3</experiments>
</comment>
<comment type="interaction">
    <interactant intactId="EBI-10173507">
        <id>Q6UY14-3</id>
    </interactant>
    <interactant intactId="EBI-10217483">
        <id>P60412</id>
        <label>KRTAP10-11</label>
    </interactant>
    <organismsDiffer>false</organismsDiffer>
    <experiments>3</experiments>
</comment>
<comment type="interaction">
    <interactant intactId="EBI-10173507">
        <id>Q6UY14-3</id>
    </interactant>
    <interactant intactId="EBI-10172150">
        <id>P60370</id>
        <label>KRTAP10-5</label>
    </interactant>
    <organismsDiffer>false</organismsDiffer>
    <experiments>6</experiments>
</comment>
<comment type="interaction">
    <interactant intactId="EBI-10173507">
        <id>Q6UY14-3</id>
    </interactant>
    <interactant intactId="EBI-10171774">
        <id>P60410</id>
        <label>KRTAP10-8</label>
    </interactant>
    <organismsDiffer>false</organismsDiffer>
    <experiments>6</experiments>
</comment>
<comment type="interaction">
    <interactant intactId="EBI-10173507">
        <id>Q6UY14-3</id>
    </interactant>
    <interactant intactId="EBI-10172052">
        <id>P60411</id>
        <label>KRTAP10-9</label>
    </interactant>
    <organismsDiffer>false</organismsDiffer>
    <experiments>8</experiments>
</comment>
<comment type="interaction">
    <interactant intactId="EBI-10173507">
        <id>Q6UY14-3</id>
    </interactant>
    <interactant intactId="EBI-11953334">
        <id>P60328</id>
        <label>KRTAP12-3</label>
    </interactant>
    <organismsDiffer>false</organismsDiffer>
    <experiments>3</experiments>
</comment>
<comment type="interaction">
    <interactant intactId="EBI-10173507">
        <id>Q6UY14-3</id>
    </interactant>
    <interactant intactId="EBI-12196745">
        <id>Q3LHN2</id>
        <label>KRTAP19-2</label>
    </interactant>
    <organismsDiffer>false</organismsDiffer>
    <experiments>3</experiments>
</comment>
<comment type="interaction">
    <interactant intactId="EBI-10173507">
        <id>Q6UY14-3</id>
    </interactant>
    <interactant intactId="EBI-18395721">
        <id>Q3LI59</id>
        <label>KRTAP21-2</label>
    </interactant>
    <organismsDiffer>false</organismsDiffer>
    <experiments>3</experiments>
</comment>
<comment type="interaction">
    <interactant intactId="EBI-10173507">
        <id>Q6UY14-3</id>
    </interactant>
    <interactant intactId="EBI-10302392">
        <id>Q9BYQ6</id>
        <label>KRTAP4-11</label>
    </interactant>
    <organismsDiffer>false</organismsDiffer>
    <experiments>6</experiments>
</comment>
<comment type="interaction">
    <interactant intactId="EBI-10173507">
        <id>Q6UY14-3</id>
    </interactant>
    <interactant intactId="EBI-739863">
        <id>Q9BQ66</id>
        <label>KRTAP4-12</label>
    </interactant>
    <organismsDiffer>false</organismsDiffer>
    <experiments>3</experiments>
</comment>
<comment type="interaction">
    <interactant intactId="EBI-10173507">
        <id>Q6UY14-3</id>
    </interactant>
    <interactant intactId="EBI-10172511">
        <id>Q9BYR5</id>
        <label>KRTAP4-2</label>
    </interactant>
    <organismsDiffer>false</organismsDiffer>
    <experiments>6</experiments>
</comment>
<comment type="interaction">
    <interactant intactId="EBI-10173507">
        <id>Q6UY14-3</id>
    </interactant>
    <interactant intactId="EBI-11958132">
        <id>Q9BYR3</id>
        <label>KRTAP4-4</label>
    </interactant>
    <organismsDiffer>false</organismsDiffer>
    <experiments>3</experiments>
</comment>
<comment type="interaction">
    <interactant intactId="EBI-10173507">
        <id>Q6UY14-3</id>
    </interactant>
    <interactant intactId="EBI-11958178">
        <id>Q701N4</id>
        <label>KRTAP5-2</label>
    </interactant>
    <organismsDiffer>false</organismsDiffer>
    <experiments>3</experiments>
</comment>
<comment type="interaction">
    <interactant intactId="EBI-10173507">
        <id>Q6UY14-3</id>
    </interactant>
    <interactant intactId="EBI-11974251">
        <id>Q6L8H2</id>
        <label>KRTAP5-3</label>
    </interactant>
    <organismsDiffer>false</organismsDiffer>
    <experiments>3</experiments>
</comment>
<comment type="interaction">
    <interactant intactId="EBI-10173507">
        <id>Q6UY14-3</id>
    </interactant>
    <interactant intactId="EBI-11963072">
        <id>Q6L8H1</id>
        <label>KRTAP5-4</label>
    </interactant>
    <organismsDiffer>false</organismsDiffer>
    <experiments>3</experiments>
</comment>
<comment type="interaction">
    <interactant intactId="EBI-10173507">
        <id>Q6UY14-3</id>
    </interactant>
    <interactant intactId="EBI-10250562">
        <id>Q6L8G9</id>
        <label>KRTAP5-6</label>
    </interactant>
    <organismsDiffer>false</organismsDiffer>
    <experiments>3</experiments>
</comment>
<comment type="interaction">
    <interactant intactId="EBI-10173507">
        <id>Q6UY14-3</id>
    </interactant>
    <interactant intactId="EBI-11987425">
        <id>Q6L8G8</id>
        <label>KRTAP5-7</label>
    </interactant>
    <organismsDiffer>false</organismsDiffer>
    <experiments>3</experiments>
</comment>
<comment type="interaction">
    <interactant intactId="EBI-10173507">
        <id>Q6UY14-3</id>
    </interactant>
    <interactant intactId="EBI-3958099">
        <id>P26371</id>
        <label>KRTAP5-9</label>
    </interactant>
    <organismsDiffer>false</organismsDiffer>
    <experiments>8</experiments>
</comment>
<comment type="interaction">
    <interactant intactId="EBI-10173507">
        <id>Q6UY14-3</id>
    </interactant>
    <interactant intactId="EBI-11962084">
        <id>Q3LI66</id>
        <label>KRTAP6-2</label>
    </interactant>
    <organismsDiffer>false</organismsDiffer>
    <experiments>3</experiments>
</comment>
<comment type="interaction">
    <interactant intactId="EBI-10173507">
        <id>Q6UY14-3</id>
    </interactant>
    <interactant intactId="EBI-22311199">
        <id>Q3LI67</id>
        <label>KRTAP6-3</label>
    </interactant>
    <organismsDiffer>false</organismsDiffer>
    <experiments>3</experiments>
</comment>
<comment type="interaction">
    <interactant intactId="EBI-10173507">
        <id>Q6UY14-3</id>
    </interactant>
    <interactant intactId="EBI-1044640">
        <id>Q9BYQ4</id>
        <label>KRTAP9-2</label>
    </interactant>
    <organismsDiffer>false</organismsDiffer>
    <experiments>6</experiments>
</comment>
<comment type="interaction">
    <interactant intactId="EBI-10173507">
        <id>Q6UY14-3</id>
    </interactant>
    <interactant intactId="EBI-1043191">
        <id>Q9BYQ3</id>
        <label>KRTAP9-3</label>
    </interactant>
    <organismsDiffer>false</organismsDiffer>
    <experiments>3</experiments>
</comment>
<comment type="interaction">
    <interactant intactId="EBI-10173507">
        <id>Q6UY14-3</id>
    </interactant>
    <interactant intactId="EBI-10185730">
        <id>Q9BYQ2</id>
        <label>KRTAP9-4</label>
    </interactant>
    <organismsDiffer>false</organismsDiffer>
    <experiments>3</experiments>
</comment>
<comment type="interaction">
    <interactant intactId="EBI-10173507">
        <id>Q6UY14-3</id>
    </interactant>
    <interactant intactId="EBI-21591415">
        <id>P13473-2</id>
        <label>LAMP2</label>
    </interactant>
    <organismsDiffer>false</organismsDiffer>
    <experiments>3</experiments>
</comment>
<comment type="interaction">
    <interactant intactId="EBI-10173507">
        <id>Q6UY14-3</id>
    </interactant>
    <interactant intactId="EBI-11962058">
        <id>Q5T7P2</id>
        <label>LCE1A</label>
    </interactant>
    <organismsDiffer>false</organismsDiffer>
    <experiments>3</experiments>
</comment>
<comment type="interaction">
    <interactant intactId="EBI-10173507">
        <id>Q6UY14-3</id>
    </interactant>
    <interactant intactId="EBI-10245913">
        <id>Q5T7P3</id>
        <label>LCE1B</label>
    </interactant>
    <organismsDiffer>false</organismsDiffer>
    <experiments>6</experiments>
</comment>
<comment type="interaction">
    <interactant intactId="EBI-10173507">
        <id>Q6UY14-3</id>
    </interactant>
    <interactant intactId="EBI-12224199">
        <id>Q5T751</id>
        <label>LCE1C</label>
    </interactant>
    <organismsDiffer>false</organismsDiffer>
    <experiments>3</experiments>
</comment>
<comment type="interaction">
    <interactant intactId="EBI-10173507">
        <id>Q6UY14-3</id>
    </interactant>
    <interactant intactId="EBI-11958008">
        <id>Q5T754</id>
        <label>LCE1F</label>
    </interactant>
    <organismsDiffer>false</organismsDiffer>
    <experiments>3</experiments>
</comment>
<comment type="interaction">
    <interactant intactId="EBI-10173507">
        <id>Q6UY14-3</id>
    </interactant>
    <interactant intactId="EBI-10246607">
        <id>Q5TA79</id>
        <label>LCE2A</label>
    </interactant>
    <organismsDiffer>false</organismsDiffer>
    <experiments>3</experiments>
</comment>
<comment type="interaction">
    <interactant intactId="EBI-10173507">
        <id>Q6UY14-3</id>
    </interactant>
    <interactant intactId="EBI-11478468">
        <id>O14633</id>
        <label>LCE2B</label>
    </interactant>
    <organismsDiffer>false</organismsDiffer>
    <experiments>6</experiments>
</comment>
<comment type="interaction">
    <interactant intactId="EBI-10173507">
        <id>Q6UY14-3</id>
    </interactant>
    <interactant intactId="EBI-11973993">
        <id>Q5TA81</id>
        <label>LCE2C</label>
    </interactant>
    <organismsDiffer>false</organismsDiffer>
    <experiments>3</experiments>
</comment>
<comment type="interaction">
    <interactant intactId="EBI-10173507">
        <id>Q6UY14-3</id>
    </interactant>
    <interactant intactId="EBI-10246750">
        <id>Q5TA82</id>
        <label>LCE2D</label>
    </interactant>
    <organismsDiffer>false</organismsDiffer>
    <experiments>6</experiments>
</comment>
<comment type="interaction">
    <interactant intactId="EBI-10173507">
        <id>Q6UY14-3</id>
    </interactant>
    <interactant intactId="EBI-9394625">
        <id>Q5TA76</id>
        <label>LCE3A</label>
    </interactant>
    <organismsDiffer>false</organismsDiffer>
    <experiments>3</experiments>
</comment>
<comment type="interaction">
    <interactant intactId="EBI-10173507">
        <id>Q6UY14-3</id>
    </interactant>
    <interactant intactId="EBI-10245291">
        <id>Q5T5A8</id>
        <label>LCE3C</label>
    </interactant>
    <organismsDiffer>false</organismsDiffer>
    <experiments>6</experiments>
</comment>
<comment type="interaction">
    <interactant intactId="EBI-10173507">
        <id>Q6UY14-3</id>
    </interactant>
    <interactant intactId="EBI-6658837">
        <id>Q9BYE3</id>
        <label>LCE3D</label>
    </interactant>
    <organismsDiffer>false</organismsDiffer>
    <experiments>3</experiments>
</comment>
<comment type="interaction">
    <interactant intactId="EBI-10173507">
        <id>Q6UY14-3</id>
    </interactant>
    <interactant intactId="EBI-10245456">
        <id>Q5T5B0</id>
        <label>LCE3E</label>
    </interactant>
    <organismsDiffer>false</organismsDiffer>
    <experiments>6</experiments>
</comment>
<comment type="interaction">
    <interactant intactId="EBI-10173507">
        <id>Q6UY14-3</id>
    </interactant>
    <interactant intactId="EBI-10246358">
        <id>Q5TA78</id>
        <label>LCE4A</label>
    </interactant>
    <organismsDiffer>false</organismsDiffer>
    <experiments>6</experiments>
</comment>
<comment type="interaction">
    <interactant intactId="EBI-10173507">
        <id>Q6UY14-3</id>
    </interactant>
    <interactant intactId="EBI-10274069">
        <id>Q8TCE9</id>
        <label>LGALS14</label>
    </interactant>
    <organismsDiffer>false</organismsDiffer>
    <experiments>3</experiments>
</comment>
<comment type="interaction">
    <interactant intactId="EBI-10173507">
        <id>Q6UY14-3</id>
    </interactant>
    <interactant intactId="EBI-16429099">
        <id>A0A0S2Z5S9</id>
        <label>LHX4</label>
    </interactant>
    <organismsDiffer>false</organismsDiffer>
    <experiments>3</experiments>
</comment>
<comment type="interaction">
    <interactant intactId="EBI-10173507">
        <id>Q6UY14-3</id>
    </interactant>
    <interactant intactId="EBI-8639312">
        <id>P25800</id>
        <label>LMO1</label>
    </interactant>
    <organismsDiffer>false</organismsDiffer>
    <experiments>3</experiments>
</comment>
<comment type="interaction">
    <interactant intactId="EBI-10173507">
        <id>Q6UY14-3</id>
    </interactant>
    <interactant intactId="EBI-739696">
        <id>P25791</id>
        <label>LMO2</label>
    </interactant>
    <organismsDiffer>false</organismsDiffer>
    <experiments>3</experiments>
</comment>
<comment type="interaction">
    <interactant intactId="EBI-10173507">
        <id>Q6UY14-3</id>
    </interactant>
    <interactant intactId="EBI-11959475">
        <id>P25791-3</id>
        <label>LMO2</label>
    </interactant>
    <organismsDiffer>false</organismsDiffer>
    <experiments>3</experiments>
</comment>
<comment type="interaction">
    <interactant intactId="EBI-10173507">
        <id>Q6UY14-3</id>
    </interactant>
    <interactant intactId="EBI-2798728">
        <id>P61968</id>
        <label>LMO4</label>
    </interactant>
    <organismsDiffer>false</organismsDiffer>
    <experiments>3</experiments>
</comment>
<comment type="interaction">
    <interactant intactId="EBI-10173507">
        <id>Q6UY14-3</id>
    </interactant>
    <interactant intactId="EBI-739832">
        <id>Q8TBB1</id>
        <label>LNX1</label>
    </interactant>
    <organismsDiffer>false</organismsDiffer>
    <experiments>3</experiments>
</comment>
<comment type="interaction">
    <interactant intactId="EBI-10173507">
        <id>Q6UY14-3</id>
    </interactant>
    <interactant intactId="EBI-2341787">
        <id>Q17RB8</id>
        <label>LONRF1</label>
    </interactant>
    <organismsDiffer>false</organismsDiffer>
    <experiments>6</experiments>
</comment>
<comment type="interaction">
    <interactant intactId="EBI-10173507">
        <id>Q6UY14-3</id>
    </interactant>
    <interactant intactId="EBI-7910762">
        <id>Q6PJG9</id>
        <label>LRFN4</label>
    </interactant>
    <organismsDiffer>false</organismsDiffer>
    <experiments>3</experiments>
</comment>
<comment type="interaction">
    <interactant intactId="EBI-10173507">
        <id>Q6UY14-3</id>
    </interactant>
    <interactant intactId="EBI-746778">
        <id>Q96A72</id>
        <label>MAGOHB</label>
    </interactant>
    <organismsDiffer>false</organismsDiffer>
    <experiments>3</experiments>
</comment>
<comment type="interaction">
    <interactant intactId="EBI-10173507">
        <id>Q6UY14-3</id>
    </interactant>
    <interactant intactId="EBI-947402">
        <id>O60336</id>
        <label>MAPKBP1</label>
    </interactant>
    <organismsDiffer>false</organismsDiffer>
    <experiments>6</experiments>
</comment>
<comment type="interaction">
    <interactant intactId="EBI-10173507">
        <id>Q6UY14-3</id>
    </interactant>
    <interactant intactId="EBI-10172526">
        <id>Q9UJV3-2</id>
        <label>MID2</label>
    </interactant>
    <organismsDiffer>false</organismsDiffer>
    <experiments>6</experiments>
</comment>
<comment type="interaction">
    <interactant intactId="EBI-10173507">
        <id>Q6UY14-3</id>
    </interactant>
    <interactant intactId="EBI-2340269">
        <id>Q13064</id>
        <label>MKRN3</label>
    </interactant>
    <organismsDiffer>false</organismsDiffer>
    <experiments>3</experiments>
</comment>
<comment type="interaction">
    <interactant intactId="EBI-10173507">
        <id>Q6UY14-3</id>
    </interactant>
    <interactant intactId="EBI-9675802">
        <id>Q6PF18</id>
        <label>MORN3</label>
    </interactant>
    <organismsDiffer>false</organismsDiffer>
    <experiments>3</experiments>
</comment>
<comment type="interaction">
    <interactant intactId="EBI-10173507">
        <id>Q6UY14-3</id>
    </interactant>
    <interactant intactId="EBI-6952711">
        <id>Q8WY64</id>
        <label>MYLIP</label>
    </interactant>
    <organismsDiffer>false</organismsDiffer>
    <experiments>3</experiments>
</comment>
<comment type="interaction">
    <interactant intactId="EBI-10173507">
        <id>Q6UY14-3</id>
    </interactant>
    <interactant intactId="EBI-7950783">
        <id>Q96JP2</id>
        <label>MYO15B</label>
    </interactant>
    <organismsDiffer>false</organismsDiffer>
    <experiments>3</experiments>
</comment>
<comment type="interaction">
    <interactant intactId="EBI-10173507">
        <id>Q6UY14-3</id>
    </interactant>
    <interactant intactId="EBI-8656665">
        <id>Q8N6N6</id>
        <label>NATD1</label>
    </interactant>
    <organismsDiffer>false</organismsDiffer>
    <experiments>6</experiments>
</comment>
<comment type="interaction">
    <interactant intactId="EBI-10173507">
        <id>Q6UY14-3</id>
    </interactant>
    <interactant intactId="EBI-1752987">
        <id>Q86SG6</id>
        <label>NEK8</label>
    </interactant>
    <organismsDiffer>false</organismsDiffer>
    <experiments>3</experiments>
</comment>
<comment type="interaction">
    <interactant intactId="EBI-10173507">
        <id>Q6UY14-3</id>
    </interactant>
    <interactant intactId="EBI-10271199">
        <id>Q8NI38</id>
        <label>NFKBID</label>
    </interactant>
    <organismsDiffer>false</organismsDiffer>
    <experiments>3</experiments>
</comment>
<comment type="interaction">
    <interactant intactId="EBI-10173507">
        <id>Q6UY14-3</id>
    </interactant>
    <interactant intactId="EBI-10303844">
        <id>Q9GZQ4</id>
        <label>NMUR2</label>
    </interactant>
    <organismsDiffer>false</organismsDiffer>
    <experiments>3</experiments>
</comment>
<comment type="interaction">
    <interactant intactId="EBI-10173507">
        <id>Q6UY14-3</id>
    </interactant>
    <interactant intactId="EBI-22310682">
        <id>P0DPK4</id>
        <label>NOTCH2NLC</label>
    </interactant>
    <organismsDiffer>false</organismsDiffer>
    <experiments>3</experiments>
</comment>
<comment type="interaction">
    <interactant intactId="EBI-10173507">
        <id>Q6UY14-3</id>
    </interactant>
    <interactant intactId="EBI-13644623">
        <id>Q92570</id>
        <label>NR4A3</label>
    </interactant>
    <organismsDiffer>false</organismsDiffer>
    <experiments>3</experiments>
</comment>
<comment type="interaction">
    <interactant intactId="EBI-10173507">
        <id>Q6UY14-3</id>
    </interactant>
    <interactant intactId="EBI-741158">
        <id>Q96HA8</id>
        <label>NTAQ1</label>
    </interactant>
    <organismsDiffer>false</organismsDiffer>
    <experiments>3</experiments>
</comment>
<comment type="interaction">
    <interactant intactId="EBI-10173507">
        <id>Q6UY14-3</id>
    </interactant>
    <interactant intactId="EBI-3907456">
        <id>P34130</id>
        <label>NTF4</label>
    </interactant>
    <organismsDiffer>false</organismsDiffer>
    <experiments>3</experiments>
</comment>
<comment type="interaction">
    <interactant intactId="EBI-10173507">
        <id>Q6UY14-3</id>
    </interactant>
    <interactant intactId="EBI-1210753">
        <id>Q7Z417</id>
        <label>NUFIP2</label>
    </interactant>
    <organismsDiffer>false</organismsDiffer>
    <experiments>3</experiments>
</comment>
<comment type="interaction">
    <interactant intactId="EBI-10173507">
        <id>Q6UY14-3</id>
    </interactant>
    <interactant intactId="EBI-10292253">
        <id>Q96PB7</id>
        <label>OLFM3</label>
    </interactant>
    <organismsDiffer>false</organismsDiffer>
    <experiments>3</experiments>
</comment>
<comment type="interaction">
    <interactant intactId="EBI-10173507">
        <id>Q6UY14-3</id>
    </interactant>
    <interactant intactId="EBI-740446">
        <id>P32242</id>
        <label>OTX1</label>
    </interactant>
    <organismsDiffer>false</organismsDiffer>
    <experiments>3</experiments>
</comment>
<comment type="interaction">
    <interactant intactId="EBI-10173507">
        <id>Q6UY14-3</id>
    </interactant>
    <interactant intactId="EBI-11956269">
        <id>Q92824-2</id>
        <label>PCSK5</label>
    </interactant>
    <organismsDiffer>false</organismsDiffer>
    <experiments>3</experiments>
</comment>
<comment type="interaction">
    <interactant intactId="EBI-10173507">
        <id>Q6UY14-3</id>
    </interactant>
    <interactant intactId="EBI-10256685">
        <id>Q7Z2X4</id>
        <label>PID1</label>
    </interactant>
    <organismsDiffer>false</organismsDiffer>
    <experiments>3</experiments>
</comment>
<comment type="interaction">
    <interactant intactId="EBI-10173507">
        <id>Q6UY14-3</id>
    </interactant>
    <interactant intactId="EBI-714158">
        <id>Q13526</id>
        <label>PIN1</label>
    </interactant>
    <organismsDiffer>false</organismsDiffer>
    <experiments>3</experiments>
</comment>
<comment type="interaction">
    <interactant intactId="EBI-10173507">
        <id>Q6UY14-3</id>
    </interactant>
    <interactant intactId="EBI-602382">
        <id>Q16512</id>
        <label>PKN1</label>
    </interactant>
    <organismsDiffer>false</organismsDiffer>
    <experiments>3</experiments>
</comment>
<comment type="interaction">
    <interactant intactId="EBI-10173507">
        <id>Q6UY14-3</id>
    </interactant>
    <interactant intactId="EBI-769257">
        <id>Q9NRQ2</id>
        <label>PLSCR4</label>
    </interactant>
    <organismsDiffer>false</organismsDiffer>
    <experiments>3</experiments>
</comment>
<comment type="interaction">
    <interactant intactId="EBI-10173507">
        <id>Q6UY14-3</id>
    </interactant>
    <interactant intactId="EBI-50433196">
        <id>A0A6Q8PF08</id>
        <label>PMP22</label>
    </interactant>
    <organismsDiffer>false</organismsDiffer>
    <experiments>3</experiments>
</comment>
<comment type="interaction">
    <interactant intactId="EBI-10173507">
        <id>Q6UY14-3</id>
    </interactant>
    <interactant intactId="EBI-716569">
        <id>P28340</id>
        <label>POLD1</label>
    </interactant>
    <organismsDiffer>false</organismsDiffer>
    <experiments>3</experiments>
</comment>
<comment type="interaction">
    <interactant intactId="EBI-10173507">
        <id>Q6UY14-3</id>
    </interactant>
    <interactant intactId="EBI-1055079">
        <id>O15160</id>
        <label>POLR1C</label>
    </interactant>
    <organismsDiffer>false</organismsDiffer>
    <experiments>3</experiments>
</comment>
<comment type="interaction">
    <interactant intactId="EBI-10173507">
        <id>Q6UY14-3</id>
    </interactant>
    <interactant intactId="EBI-17236143">
        <id>Q12837</id>
        <label>POU4F2</label>
    </interactant>
    <organismsDiffer>false</organismsDiffer>
    <experiments>3</experiments>
</comment>
<comment type="interaction">
    <interactant intactId="EBI-10173507">
        <id>Q6UY14-3</id>
    </interactant>
    <interactant intactId="EBI-1053424">
        <id>O43741</id>
        <label>PRKAB2</label>
    </interactant>
    <organismsDiffer>false</organismsDiffer>
    <experiments>4</experiments>
</comment>
<comment type="interaction">
    <interactant intactId="EBI-10173507">
        <id>Q6UY14-3</id>
    </interactant>
    <interactant intactId="EBI-11998870">
        <id>A6NJB7-2</id>
        <label>PRR19</label>
    </interactant>
    <organismsDiffer>false</organismsDiffer>
    <experiments>3</experiments>
</comment>
<comment type="interaction">
    <interactant intactId="EBI-10173507">
        <id>Q6UY14-3</id>
    </interactant>
    <interactant intactId="EBI-10234038">
        <id>P43115-12</id>
        <label>PTGER3</label>
    </interactant>
    <organismsDiffer>false</organismsDiffer>
    <experiments>3</experiments>
</comment>
<comment type="interaction">
    <interactant intactId="EBI-10173507">
        <id>Q6UY14-3</id>
    </interactant>
    <interactant intactId="EBI-7199479">
        <id>Q8WUK0</id>
        <label>PTPMT1</label>
    </interactant>
    <organismsDiffer>false</organismsDiffer>
    <experiments>3</experiments>
</comment>
<comment type="interaction">
    <interactant intactId="EBI-10173507">
        <id>Q6UY14-3</id>
    </interactant>
    <interactant intactId="EBI-739851">
        <id>Q15274</id>
        <label>QPRT</label>
    </interactant>
    <organismsDiffer>false</organismsDiffer>
    <experiments>3</experiments>
</comment>
<comment type="interaction">
    <interactant intactId="EBI-10173507">
        <id>Q6UY14-3</id>
    </interactant>
    <interactant intactId="EBI-948428">
        <id>Q9Y2K5</id>
        <label>R3HDM2</label>
    </interactant>
    <organismsDiffer>false</organismsDiffer>
    <experiments>3</experiments>
</comment>
<comment type="interaction">
    <interactant intactId="EBI-10173507">
        <id>Q6UY14-3</id>
    </interactant>
    <interactant intactId="EBI-5542466">
        <id>Q8WUD1</id>
        <label>RAB2B</label>
    </interactant>
    <organismsDiffer>false</organismsDiffer>
    <experiments>3</experiments>
</comment>
<comment type="interaction">
    <interactant intactId="EBI-10173507">
        <id>Q6UY14-3</id>
    </interactant>
    <interactant intactId="EBI-286642">
        <id>P62826</id>
        <label>RAN</label>
    </interactant>
    <organismsDiffer>false</organismsDiffer>
    <experiments>3</experiments>
</comment>
<comment type="interaction">
    <interactant intactId="EBI-10173507">
        <id>Q6UY14-3</id>
    </interactant>
    <interactant intactId="EBI-947779">
        <id>Q96PM5</id>
        <label>RCHY1</label>
    </interactant>
    <organismsDiffer>false</organismsDiffer>
    <experiments>3</experiments>
</comment>
<comment type="interaction">
    <interactant intactId="EBI-10173507">
        <id>Q6UY14-3</id>
    </interactant>
    <interactant intactId="EBI-712355">
        <id>O15211</id>
        <label>RGL2</label>
    </interactant>
    <organismsDiffer>false</organismsDiffer>
    <experiments>3</experiments>
</comment>
<comment type="interaction">
    <interactant intactId="EBI-10173507">
        <id>Q6UY14-3</id>
    </interactant>
    <interactant intactId="EBI-6285694">
        <id>Q9H4E5</id>
        <label>RHOJ</label>
    </interactant>
    <organismsDiffer>false</organismsDiffer>
    <experiments>3</experiments>
</comment>
<comment type="interaction">
    <interactant intactId="EBI-10173507">
        <id>Q6UY14-3</id>
    </interactant>
    <interactant intactId="EBI-396669">
        <id>Q9Y3C5</id>
        <label>RNF11</label>
    </interactant>
    <organismsDiffer>false</organismsDiffer>
    <experiments>3</experiments>
</comment>
<comment type="interaction">
    <interactant intactId="EBI-10173507">
        <id>Q6UY14-3</id>
    </interactant>
    <interactant intactId="EBI-4479407">
        <id>Q86WX3</id>
        <label>RPS19BP1</label>
    </interactant>
    <organismsDiffer>false</organismsDiffer>
    <experiments>3</experiments>
</comment>
<comment type="interaction">
    <interactant intactId="EBI-10173507">
        <id>Q6UY14-3</id>
    </interactant>
    <interactant intactId="EBI-11984663">
        <id>Q06455-2</id>
        <label>RUNX1T1</label>
    </interactant>
    <organismsDiffer>false</organismsDiffer>
    <experiments>3</experiments>
</comment>
<comment type="interaction">
    <interactant intactId="EBI-10173507">
        <id>Q6UY14-3</id>
    </interactant>
    <interactant intactId="EBI-748391">
        <id>Q9BWG6</id>
        <label>SCNM1</label>
    </interactant>
    <organismsDiffer>false</organismsDiffer>
    <experiments>3</experiments>
</comment>
<comment type="interaction">
    <interactant intactId="EBI-10173507">
        <id>Q6UY14-3</id>
    </interactant>
    <interactant intactId="EBI-10313866">
        <id>Q9NUL5</id>
        <label>SHFL</label>
    </interactant>
    <organismsDiffer>false</organismsDiffer>
    <experiments>3</experiments>
</comment>
<comment type="interaction">
    <interactant intactId="EBI-10173507">
        <id>Q6UY14-3</id>
    </interactant>
    <interactant intactId="EBI-11955083">
        <id>Q9NUL5-4</id>
        <label>SHFL</label>
    </interactant>
    <organismsDiffer>false</organismsDiffer>
    <experiments>3</experiments>
</comment>
<comment type="interaction">
    <interactant intactId="EBI-10173507">
        <id>Q6UY14-3</id>
    </interactant>
    <interactant intactId="EBI-12002412">
        <id>Q86YT5</id>
        <label>SLC13A5</label>
    </interactant>
    <organismsDiffer>false</organismsDiffer>
    <experiments>3</experiments>
</comment>
<comment type="interaction">
    <interactant intactId="EBI-10173507">
        <id>Q6UY14-3</id>
    </interactant>
    <interactant intactId="EBI-1759386">
        <id>Q9UHI7</id>
        <label>SLC23A1</label>
    </interactant>
    <organismsDiffer>false</organismsDiffer>
    <experiments>3</experiments>
</comment>
<comment type="interaction">
    <interactant intactId="EBI-10173507">
        <id>Q6UY14-3</id>
    </interactant>
    <interactant intactId="EBI-10311198">
        <id>Q9NP91</id>
        <label>SLC6A20</label>
    </interactant>
    <organismsDiffer>false</organismsDiffer>
    <experiments>3</experiments>
</comment>
<comment type="interaction">
    <interactant intactId="EBI-10173507">
        <id>Q6UY14-3</id>
    </interactant>
    <interactant intactId="EBI-947791">
        <id>O75093</id>
        <label>SLIT1</label>
    </interactant>
    <organismsDiffer>false</organismsDiffer>
    <experiments>3</experiments>
</comment>
<comment type="interaction">
    <interactant intactId="EBI-10173507">
        <id>Q6UY14-3</id>
    </interactant>
    <interactant intactId="EBI-355653">
        <id>Q92922</id>
        <label>SMARCC1</label>
    </interactant>
    <organismsDiffer>false</organismsDiffer>
    <experiments>6</experiments>
</comment>
<comment type="interaction">
    <interactant intactId="EBI-10173507">
        <id>Q6UY14-3</id>
    </interactant>
    <interactant intactId="EBI-8635958">
        <id>Q6RVD6</id>
        <label>SPATA8</label>
    </interactant>
    <organismsDiffer>false</organismsDiffer>
    <experiments>3</experiments>
</comment>
<comment type="interaction">
    <interactant intactId="EBI-10173507">
        <id>Q6UY14-3</id>
    </interactant>
    <interactant intactId="EBI-10200479">
        <id>P20155</id>
        <label>SPINK2</label>
    </interactant>
    <organismsDiffer>false</organismsDiffer>
    <experiments>3</experiments>
</comment>
<comment type="interaction">
    <interactant intactId="EBI-10173507">
        <id>Q6UY14-3</id>
    </interactant>
    <interactant intactId="EBI-5235340">
        <id>Q7Z699</id>
        <label>SPRED1</label>
    </interactant>
    <organismsDiffer>false</organismsDiffer>
    <experiments>3</experiments>
</comment>
<comment type="interaction">
    <interactant intactId="EBI-10173507">
        <id>Q6UY14-3</id>
    </interactant>
    <interactant intactId="EBI-3866665">
        <id>O43609</id>
        <label>SPRY1</label>
    </interactant>
    <organismsDiffer>false</organismsDiffer>
    <experiments>3</experiments>
</comment>
<comment type="interaction">
    <interactant intactId="EBI-10173507">
        <id>Q6UY14-3</id>
    </interactant>
    <interactant intactId="EBI-749295">
        <id>O75716</id>
        <label>STK16</label>
    </interactant>
    <organismsDiffer>false</organismsDiffer>
    <experiments>3</experiments>
</comment>
<comment type="interaction">
    <interactant intactId="EBI-10173507">
        <id>Q6UY14-3</id>
    </interactant>
    <interactant intactId="EBI-2866213">
        <id>Q92537</id>
        <label>SUSD6</label>
    </interactant>
    <organismsDiffer>false</organismsDiffer>
    <experiments>3</experiments>
</comment>
<comment type="interaction">
    <interactant intactId="EBI-10173507">
        <id>Q6UY14-3</id>
    </interactant>
    <interactant intactId="EBI-710310">
        <id>Q15560</id>
        <label>TCEA2</label>
    </interactant>
    <organismsDiffer>false</organismsDiffer>
    <experiments>3</experiments>
</comment>
<comment type="interaction">
    <interactant intactId="EBI-10173507">
        <id>Q6UY14-3</id>
    </interactant>
    <interactant intactId="EBI-11952651">
        <id>Q7Z6R9</id>
        <label>TFAP2D</label>
    </interactant>
    <organismsDiffer>false</organismsDiffer>
    <experiments>3</experiments>
</comment>
<comment type="interaction">
    <interactant intactId="EBI-10173507">
        <id>Q6UY14-3</id>
    </interactant>
    <interactant intactId="EBI-779636">
        <id>P01137</id>
        <label>TGFB1</label>
    </interactant>
    <organismsDiffer>false</organismsDiffer>
    <experiments>3</experiments>
</comment>
<comment type="interaction">
    <interactant intactId="EBI-10173507">
        <id>Q6UY14-3</id>
    </interactant>
    <interactant intactId="EBI-3925505">
        <id>Q8TBB0</id>
        <label>THAP6</label>
    </interactant>
    <organismsDiffer>false</organismsDiffer>
    <experiments>3</experiments>
</comment>
<comment type="interaction">
    <interactant intactId="EBI-10173507">
        <id>Q6UY14-3</id>
    </interactant>
    <interactant intactId="EBI-2799342">
        <id>Q86TG1</id>
        <label>TMEM150A</label>
    </interactant>
    <organismsDiffer>false</organismsDiffer>
    <experiments>3</experiments>
</comment>
<comment type="interaction">
    <interactant intactId="EBI-10173507">
        <id>Q6UY14-3</id>
    </interactant>
    <interactant intactId="EBI-373403">
        <id>O95985</id>
        <label>TOP3B</label>
    </interactant>
    <organismsDiffer>false</organismsDiffer>
    <experiments>3</experiments>
</comment>
<comment type="interaction">
    <interactant intactId="EBI-10173507">
        <id>Q6UY14-3</id>
    </interactant>
    <interactant intactId="EBI-5235829">
        <id>Q8IWZ5</id>
        <label>TRIM42</label>
    </interactant>
    <organismsDiffer>false</organismsDiffer>
    <experiments>3</experiments>
</comment>
<comment type="interaction">
    <interactant intactId="EBI-10173507">
        <id>Q6UY14-3</id>
    </interactant>
    <interactant intactId="EBI-742327">
        <id>Q15654</id>
        <label>TRIP6</label>
    </interactant>
    <organismsDiffer>false</organismsDiffer>
    <experiments>3</experiments>
</comment>
<comment type="interaction">
    <interactant intactId="EBI-10173507">
        <id>Q6UY14-3</id>
    </interactant>
    <interactant intactId="EBI-3918381">
        <id>Q96PN8</id>
        <label>TSSK3</label>
    </interactant>
    <organismsDiffer>false</organismsDiffer>
    <experiments>3</experiments>
</comment>
<comment type="interaction">
    <interactant intactId="EBI-10173507">
        <id>Q6UY14-3</id>
    </interactant>
    <interactant intactId="EBI-373242">
        <id>Q9UK80</id>
        <label>USP21</label>
    </interactant>
    <organismsDiffer>false</organismsDiffer>
    <experiments>3</experiments>
</comment>
<comment type="interaction">
    <interactant intactId="EBI-10173507">
        <id>Q6UY14-3</id>
    </interactant>
    <interactant intactId="EBI-10249550">
        <id>Q6EMK4</id>
        <label>VASN</label>
    </interactant>
    <organismsDiffer>false</organismsDiffer>
    <experiments>3</experiments>
</comment>
<comment type="interaction">
    <interactant intactId="EBI-10173507">
        <id>Q6UY14-3</id>
    </interactant>
    <interactant intactId="EBI-10191303">
        <id>O95231</id>
        <label>VENTX</label>
    </interactant>
    <organismsDiffer>false</organismsDiffer>
    <experiments>3</experiments>
</comment>
<comment type="interaction">
    <interactant intactId="EBI-10173507">
        <id>Q6UY14-3</id>
    </interactant>
    <interactant intactId="EBI-11957238">
        <id>Q2TAL6</id>
        <label>VWC2</label>
    </interactant>
    <organismsDiffer>false</organismsDiffer>
    <experiments>6</experiments>
</comment>
<comment type="interaction">
    <interactant intactId="EBI-10173507">
        <id>Q6UY14-3</id>
    </interactant>
    <interactant intactId="EBI-720609">
        <id>O76024</id>
        <label>WFS1</label>
    </interactant>
    <organismsDiffer>false</organismsDiffer>
    <experiments>3</experiments>
</comment>
<comment type="interaction">
    <interactant intactId="EBI-10173507">
        <id>Q6UY14-3</id>
    </interactant>
    <interactant intactId="EBI-11994144">
        <id>A2RRC6</id>
        <label>ZFHX2</label>
    </interactant>
    <organismsDiffer>false</organismsDiffer>
    <experiments>3</experiments>
</comment>
<comment type="interaction">
    <interactant intactId="EBI-10173507">
        <id>Q6UY14-3</id>
    </interactant>
    <interactant intactId="EBI-373456">
        <id>Q9Y3S2</id>
        <label>ZNF330</label>
    </interactant>
    <organismsDiffer>false</organismsDiffer>
    <experiments>3</experiments>
</comment>
<comment type="interaction">
    <interactant intactId="EBI-10173507">
        <id>Q6UY14-3</id>
    </interactant>
    <interactant intactId="EBI-744257">
        <id>Q96IQ9</id>
        <label>ZNF414</label>
    </interactant>
    <organismsDiffer>false</organismsDiffer>
    <experiments>3</experiments>
</comment>
<comment type="interaction">
    <interactant intactId="EBI-10173507">
        <id>Q6UY14-3</id>
    </interactant>
    <interactant intactId="EBI-740727">
        <id>Q8TAU3</id>
        <label>ZNF417</label>
    </interactant>
    <organismsDiffer>false</organismsDiffer>
    <experiments>6</experiments>
</comment>
<comment type="interaction">
    <interactant intactId="EBI-10173507">
        <id>Q6UY14-3</id>
    </interactant>
    <interactant intactId="EBI-6427977">
        <id>Q96SQ5</id>
        <label>ZNF587</label>
    </interactant>
    <organismsDiffer>false</organismsDiffer>
    <experiments>3</experiments>
</comment>
<comment type="interaction">
    <interactant intactId="EBI-10173507">
        <id>Q6UY14-3</id>
    </interactant>
    <interactant intactId="EBI-10242473">
        <id>Q53FW8</id>
    </interactant>
    <organismsDiffer>false</organismsDiffer>
    <experiments>3</experiments>
</comment>
<comment type="subcellular location">
    <subcellularLocation>
        <location evidence="14">Secreted</location>
        <location evidence="14">Extracellular space</location>
        <location evidence="14">Extracellular matrix</location>
    </subcellularLocation>
    <text>Colocalizes with FMN1 microfibrils in the eye ECM.</text>
</comment>
<comment type="alternative products">
    <event type="alternative splicing"/>
    <isoform>
        <id>Q6UY14-1</id>
        <name evidence="6">1</name>
        <sequence type="displayed"/>
    </isoform>
    <isoform>
        <id>Q6UY14-2</id>
        <name evidence="7">2</name>
        <sequence type="described" ref="VSP_052183 VSP_052184"/>
    </isoform>
    <isoform>
        <id>Q6UY14-3</id>
        <name>3</name>
        <sequence type="described" ref="VSP_055759"/>
    </isoform>
</comment>
<comment type="tissue specificity">
    <text evidence="12">Expressed in colon, heart, leukocyte, liver, lung, skeletal muscle, spleen, testis and placenta. Weaker expression in bone marrow, brain tissue, kidney and pancreas. Expression studies in fetal tissues reveal strong expression in heart, kidney, liver, lung and skeletal muscle, but weaker expression in fetal brain and skin.</text>
</comment>
<comment type="PTM">
    <text evidence="1">N-glycosylated. Can be O-fucosylated by POFUT2 on a serine or a threonine residue found within the consensus sequence C1-X(2)-(S/T)-C2-G of the TSP type-1 repeat domains where C1 and C2 are the first and second cysteine residue of the repeat, respectively. Fucosylated repeats can then be further glycosylated by the addition of a beta-1,3-glucose residue by the glucosyltransferase, B3GALTL. Fucosylation mediates the efficient secretion of ADAMTS family members. Can also be C-glycosylated with one or two mannose molecules on tryptophan residues within the consensus sequence W-X-X-W of the TPRs. N- and C-glycosylations can also facilitate secretion (By similarity).</text>
</comment>
<comment type="disease" evidence="12">
    <disease id="DI-01244">
        <name>Ectopia lentis 2, isolated, autosomal recessive</name>
        <acronym>ECTOL2</acronym>
        <description>An ocular abnormality characterized by partial or complete displacement of the lens from its space resulting from defective zonule formation.</description>
        <dbReference type="MIM" id="225100"/>
    </disease>
    <text>The disease is caused by variants affecting the gene represented in this entry.</text>
</comment>
<comment type="disease" evidence="13">
    <disease id="DI-03690">
        <name>Ectopia lentis et pupillae</name>
        <acronym>ECTOLP</acronym>
        <description>An ocular abnormality characterized by displacement of the lenses and the pupils, associated with other ocular anomalies, but without systemic manifestations. The condition is usually bilateral, with the lenses and pupils displaced in opposite directions. Additional signs include enlarged corneal diameter, increased corneal astigmatism, increased anterior chamber depth, thinning and flattening of the iris with loss of crypts, angle malformation caused by enlarged iris processes, persistent pupillary membrane, loss of zonular fibers, tilted disk, and increased axial length. Secondary manifestations include refractive errors, glaucoma, early cataract development, and retinal detachment. Membrane formation on the posterior aspect of the iris has been observed both in histologic sections and on ultrasound biomicroscopy.</description>
        <dbReference type="MIM" id="225200"/>
    </disease>
    <text>The disease is caused by variants affecting the gene represented in this entry.</text>
</comment>
<comment type="caution">
    <text evidence="17">Although similar to members of the ADAMTS family, it lacks the metalloprotease and disintegrin-like domains which are typical of that family.</text>
</comment>
<comment type="sequence caution" evidence="17">
    <conflict type="frameshift">
        <sequence resource="EMBL-CDS" id="AAG17217"/>
    </conflict>
</comment>
<sequence length="1074" mass="116545">MENWTGRPWLYLLLLLSLPQLCLDQEVLSGHSLQTPTEEGQGPEGVWGPWVQWASCSQPCGVGVQRRSRTCQLPTVQLHPSLPLPPRPPRHPEALLPRGQGPRPQTSPETLPLYRTQSRGRGGPLRGPASHLGREETQEIRAARRSRLRDPIKPGMFGYGRVPFALPLHRNRRHPRSPPRSELSLISSRGEEAIPSPTPRAEPFSANGSPQTELPPTELSVHTPSPQAEPLSPETAQTEVAPRTRPAPLRHHPRAQASGTEPPSPTHSLGEGGFFRASPQPRRPSSQGWASPQVAGRRPDPFPSVPRGRGQQGQGPWGTGGTPHGPRLEPDPQHPGAWLPLLSNGPHASSLWSLFAPSSPIPRCSGESEQLRACSQAPCPPEQPDPRALQCAAFNSQEFMGQLYQWEPFTEVQGSQRCELNCRPRGFRFYVRHTEKVQDGTLCQPGAPDICVAGRCLSPGCDGILGSGRRPDGCGVCGGDDSTCRLVSGNLTDRGGPLGYQKILWIPAGALRLQIAQLRPSSNYLALRGPGGRSIINGNWAVDPPGSYRAGGTVFRYNRPPREEGKGESLSAEGPTTQPVDVYMIFQEENPGVFYQYVISSPPPILENPTPEPPVPQLQPEILRVEPPLAPAPRPARTPGTLQRQVRIPQMPAPPHPRTPLGSPAAYWKRVGHSACSASCGKGVWRPIFLCISRESGEELDERSCAAGARPPASPEPCHGTPCPPYWEAGEWTSCSRSCGPGTQHRQLQCRQEFGGGGSSVPPERCGHLPRPNITQSCQLRLCGHWEVGSPWSQCSVRCGRGQRSRQVRCVGNNGDEVSEQECASGPPQPPSREACDMGPCTTAWFHSDWSSKCSAECGTGIQRRSVVCLGSGAALGPGQGEAGAGTGQSCPTGSRPPDMRACSLGPCERTWRWYTGPWGECSSECGSGTQRRDIICVSKLGTEFNVTSPSNCSHLPRPPALQPCQGQACQDRWFSTPWSPCSRSCQGGTQTREVQCLSTNQTLSTRCPPQLRPSRKRPCNSQPCSQRPDDQCKDSSPHCPLVVQARLCVYPYYTATCCRSCAHVLERSPQDPS</sequence>
<proteinExistence type="evidence at protein level"/>
<reference evidence="17 19" key="1">
    <citation type="journal article" date="2003" name="Genome Res.">
        <title>The secreted protein discovery initiative (SPDI), a large-scale effort to identify novel human secreted and transmembrane proteins: a bioinformatics assessment.</title>
        <authorList>
            <person name="Clark H.F."/>
            <person name="Gurney A.L."/>
            <person name="Abaya E."/>
            <person name="Baker K."/>
            <person name="Baldwin D.T."/>
            <person name="Brush J."/>
            <person name="Chen J."/>
            <person name="Chow B."/>
            <person name="Chui C."/>
            <person name="Crowley C."/>
            <person name="Currell B."/>
            <person name="Deuel B."/>
            <person name="Dowd P."/>
            <person name="Eaton D."/>
            <person name="Foster J.S."/>
            <person name="Grimaldi C."/>
            <person name="Gu Q."/>
            <person name="Hass P.E."/>
            <person name="Heldens S."/>
            <person name="Huang A."/>
            <person name="Kim H.S."/>
            <person name="Klimowski L."/>
            <person name="Jin Y."/>
            <person name="Johnson S."/>
            <person name="Lee J."/>
            <person name="Lewis L."/>
            <person name="Liao D."/>
            <person name="Mark M.R."/>
            <person name="Robbie E."/>
            <person name="Sanchez C."/>
            <person name="Schoenfeld J."/>
            <person name="Seshagiri S."/>
            <person name="Simmons L."/>
            <person name="Singh J."/>
            <person name="Smith V."/>
            <person name="Stinson J."/>
            <person name="Vagts A."/>
            <person name="Vandlen R.L."/>
            <person name="Watanabe C."/>
            <person name="Wieand D."/>
            <person name="Woods K."/>
            <person name="Xie M.-H."/>
            <person name="Yansura D.G."/>
            <person name="Yi S."/>
            <person name="Yu G."/>
            <person name="Yuan J."/>
            <person name="Zhang M."/>
            <person name="Zhang Z."/>
            <person name="Goddard A.D."/>
            <person name="Wood W.I."/>
            <person name="Godowski P.J."/>
            <person name="Gray A.M."/>
        </authorList>
    </citation>
    <scope>NUCLEOTIDE SEQUENCE [LARGE SCALE MRNA] (ISOFORM 2)</scope>
</reference>
<reference evidence="20" key="2">
    <citation type="journal article" date="2006" name="Nature">
        <title>The DNA sequence and biological annotation of human chromosome 1.</title>
        <authorList>
            <person name="Gregory S.G."/>
            <person name="Barlow K.F."/>
            <person name="McLay K.E."/>
            <person name="Kaul R."/>
            <person name="Swarbreck D."/>
            <person name="Dunham A."/>
            <person name="Scott C.E."/>
            <person name="Howe K.L."/>
            <person name="Woodfine K."/>
            <person name="Spencer C.C.A."/>
            <person name="Jones M.C."/>
            <person name="Gillson C."/>
            <person name="Searle S."/>
            <person name="Zhou Y."/>
            <person name="Kokocinski F."/>
            <person name="McDonald L."/>
            <person name="Evans R."/>
            <person name="Phillips K."/>
            <person name="Atkinson A."/>
            <person name="Cooper R."/>
            <person name="Jones C."/>
            <person name="Hall R.E."/>
            <person name="Andrews T.D."/>
            <person name="Lloyd C."/>
            <person name="Ainscough R."/>
            <person name="Almeida J.P."/>
            <person name="Ambrose K.D."/>
            <person name="Anderson F."/>
            <person name="Andrew R.W."/>
            <person name="Ashwell R.I.S."/>
            <person name="Aubin K."/>
            <person name="Babbage A.K."/>
            <person name="Bagguley C.L."/>
            <person name="Bailey J."/>
            <person name="Beasley H."/>
            <person name="Bethel G."/>
            <person name="Bird C.P."/>
            <person name="Bray-Allen S."/>
            <person name="Brown J.Y."/>
            <person name="Brown A.J."/>
            <person name="Buckley D."/>
            <person name="Burton J."/>
            <person name="Bye J."/>
            <person name="Carder C."/>
            <person name="Chapman J.C."/>
            <person name="Clark S.Y."/>
            <person name="Clarke G."/>
            <person name="Clee C."/>
            <person name="Cobley V."/>
            <person name="Collier R.E."/>
            <person name="Corby N."/>
            <person name="Coville G.J."/>
            <person name="Davies J."/>
            <person name="Deadman R."/>
            <person name="Dunn M."/>
            <person name="Earthrowl M."/>
            <person name="Ellington A.G."/>
            <person name="Errington H."/>
            <person name="Frankish A."/>
            <person name="Frankland J."/>
            <person name="French L."/>
            <person name="Garner P."/>
            <person name="Garnett J."/>
            <person name="Gay L."/>
            <person name="Ghori M.R.J."/>
            <person name="Gibson R."/>
            <person name="Gilby L.M."/>
            <person name="Gillett W."/>
            <person name="Glithero R.J."/>
            <person name="Grafham D.V."/>
            <person name="Griffiths C."/>
            <person name="Griffiths-Jones S."/>
            <person name="Grocock R."/>
            <person name="Hammond S."/>
            <person name="Harrison E.S.I."/>
            <person name="Hart E."/>
            <person name="Haugen E."/>
            <person name="Heath P.D."/>
            <person name="Holmes S."/>
            <person name="Holt K."/>
            <person name="Howden P.J."/>
            <person name="Hunt A.R."/>
            <person name="Hunt S.E."/>
            <person name="Hunter G."/>
            <person name="Isherwood J."/>
            <person name="James R."/>
            <person name="Johnson C."/>
            <person name="Johnson D."/>
            <person name="Joy A."/>
            <person name="Kay M."/>
            <person name="Kershaw J.K."/>
            <person name="Kibukawa M."/>
            <person name="Kimberley A.M."/>
            <person name="King A."/>
            <person name="Knights A.J."/>
            <person name="Lad H."/>
            <person name="Laird G."/>
            <person name="Lawlor S."/>
            <person name="Leongamornlert D.A."/>
            <person name="Lloyd D.M."/>
            <person name="Loveland J."/>
            <person name="Lovell J."/>
            <person name="Lush M.J."/>
            <person name="Lyne R."/>
            <person name="Martin S."/>
            <person name="Mashreghi-Mohammadi M."/>
            <person name="Matthews L."/>
            <person name="Matthews N.S.W."/>
            <person name="McLaren S."/>
            <person name="Milne S."/>
            <person name="Mistry S."/>
            <person name="Moore M.J.F."/>
            <person name="Nickerson T."/>
            <person name="O'Dell C.N."/>
            <person name="Oliver K."/>
            <person name="Palmeiri A."/>
            <person name="Palmer S.A."/>
            <person name="Parker A."/>
            <person name="Patel D."/>
            <person name="Pearce A.V."/>
            <person name="Peck A.I."/>
            <person name="Pelan S."/>
            <person name="Phelps K."/>
            <person name="Phillimore B.J."/>
            <person name="Plumb R."/>
            <person name="Rajan J."/>
            <person name="Raymond C."/>
            <person name="Rouse G."/>
            <person name="Saenphimmachak C."/>
            <person name="Sehra H.K."/>
            <person name="Sheridan E."/>
            <person name="Shownkeen R."/>
            <person name="Sims S."/>
            <person name="Skuce C.D."/>
            <person name="Smith M."/>
            <person name="Steward C."/>
            <person name="Subramanian S."/>
            <person name="Sycamore N."/>
            <person name="Tracey A."/>
            <person name="Tromans A."/>
            <person name="Van Helmond Z."/>
            <person name="Wall M."/>
            <person name="Wallis J.M."/>
            <person name="White S."/>
            <person name="Whitehead S.L."/>
            <person name="Wilkinson J.E."/>
            <person name="Willey D.L."/>
            <person name="Williams H."/>
            <person name="Wilming L."/>
            <person name="Wray P.W."/>
            <person name="Wu Z."/>
            <person name="Coulson A."/>
            <person name="Vaudin M."/>
            <person name="Sulston J.E."/>
            <person name="Durbin R.M."/>
            <person name="Hubbard T."/>
            <person name="Wooster R."/>
            <person name="Dunham I."/>
            <person name="Carter N.P."/>
            <person name="McVean G."/>
            <person name="Ross M.T."/>
            <person name="Harrow J."/>
            <person name="Olson M.V."/>
            <person name="Beck S."/>
            <person name="Rogers J."/>
            <person name="Bentley D.R."/>
        </authorList>
    </citation>
    <scope>NUCLEOTIDE SEQUENCE [LARGE SCALE GENOMIC DNA]</scope>
</reference>
<reference evidence="17 18" key="3">
    <citation type="journal article" date="2004" name="Genome Res.">
        <title>The status, quality, and expansion of the NIH full-length cDNA project: the Mammalian Gene Collection (MGC).</title>
        <authorList>
            <consortium name="The MGC Project Team"/>
        </authorList>
    </citation>
    <scope>NUCLEOTIDE SEQUENCE [LARGE SCALE MRNA] (ISOFORM 2)</scope>
    <scope>NUCLEOTIDE SEQUENCE [LARGE SCALE MRNA] OF 425-1074 (ISOFORM 1)</scope>
    <scope>VARIANT PRO-193</scope>
    <source>
        <tissue evidence="18">Lung</tissue>
        <tissue>Placenta</tissue>
    </source>
</reference>
<reference key="4">
    <citation type="journal article" date="2004" name="Proc. Natl. Acad. Sci. U.S.A.">
        <title>Large-scale cDNA transfection screening for genes related to cancer development and progression.</title>
        <authorList>
            <person name="Wan D."/>
            <person name="Gong Y."/>
            <person name="Qin W."/>
            <person name="Zhang P."/>
            <person name="Li J."/>
            <person name="Wei L."/>
            <person name="Zhou X."/>
            <person name="Li H."/>
            <person name="Qiu X."/>
            <person name="Zhong F."/>
            <person name="He L."/>
            <person name="Yu J."/>
            <person name="Yao G."/>
            <person name="Jiang H."/>
            <person name="Qian L."/>
            <person name="Yu Y."/>
            <person name="Shu H."/>
            <person name="Chen X."/>
            <person name="Xu H."/>
            <person name="Guo M."/>
            <person name="Pan Z."/>
            <person name="Chen Y."/>
            <person name="Ge C."/>
            <person name="Yang S."/>
            <person name="Gu J."/>
        </authorList>
    </citation>
    <scope>NUCLEOTIDE SEQUENCE [LARGE SCALE MRNA] OF 638-1074</scope>
</reference>
<reference evidence="17" key="5">
    <citation type="journal article" date="2003" name="Gene">
        <title>TSRC1, a widely expressed gene containing seven thrombospondin type I repeats.</title>
        <authorList>
            <person name="Buchner D.A."/>
            <person name="Meisler M.H."/>
        </authorList>
    </citation>
    <scope>IDENTIFICATION (ISOFORM 1)</scope>
</reference>
<reference key="6">
    <citation type="journal article" date="2005" name="J. Proteome Res.">
        <title>Human plasma N-glycoproteome analysis by immunoaffinity subtraction, hydrazide chemistry, and mass spectrometry.</title>
        <authorList>
            <person name="Liu T."/>
            <person name="Qian W.-J."/>
            <person name="Gritsenko M.A."/>
            <person name="Camp D.G. II"/>
            <person name="Monroe M.E."/>
            <person name="Moore R.J."/>
            <person name="Smith R.D."/>
        </authorList>
    </citation>
    <scope>GLYCOSYLATION [LARGE SCALE ANALYSIS] AT ASN-490</scope>
    <source>
        <tissue>Plasma</tissue>
    </source>
</reference>
<reference evidence="17" key="7">
    <citation type="journal article" date="2006" name="FEBS Lett.">
        <title>Cathepsin B and its interacting proteins, bikunin and TSRC1, correlate with TNF-induced apoptosis of ovarian cancer cells OV-90.</title>
        <authorList>
            <person name="Liu J."/>
            <person name="Guo Q."/>
            <person name="Chen B."/>
            <person name="Yu Y."/>
            <person name="Lu H."/>
            <person name="Li Y.-Y."/>
        </authorList>
    </citation>
    <scope>FUNCTION</scope>
    <scope>INTERACTION WITH CTSB</scope>
</reference>
<reference key="8">
    <citation type="journal article" date="2009" name="Am. J. Hum. Genet.">
        <title>A homozygous mutation in ADAMTSL4 causes autosomal-recessive isolated ectopia lentis.</title>
        <authorList>
            <person name="Ahram D."/>
            <person name="Sato T.S."/>
            <person name="Kohilan A."/>
            <person name="Tayeh M."/>
            <person name="Chen S."/>
            <person name="Leal S."/>
            <person name="Al-Salem M."/>
            <person name="El-Shanti H."/>
        </authorList>
    </citation>
    <scope>TISSUE SPECIFICITY</scope>
    <scope>INVOLVEMENT IN ECTOL2</scope>
</reference>
<reference key="9">
    <citation type="journal article" date="2009" name="Mol. Cell. Proteomics">
        <title>A strategy for precise and large scale identification of core fucosylated glycoproteins.</title>
        <authorList>
            <person name="Jia W."/>
            <person name="Lu Z."/>
            <person name="Fu Y."/>
            <person name="Wang H.P."/>
            <person name="Wang L.H."/>
            <person name="Chi H."/>
            <person name="Yuan Z.F."/>
            <person name="Zheng Z.B."/>
            <person name="Song L.N."/>
            <person name="Han H.H."/>
            <person name="Liang Y.M."/>
            <person name="Wang J.L."/>
            <person name="Cai Y."/>
            <person name="Zhang Y.K."/>
            <person name="Deng Y.L."/>
            <person name="Ying W.T."/>
            <person name="He S.M."/>
            <person name="Qian X.H."/>
        </authorList>
    </citation>
    <scope>GLYCOSYLATION AT ASN-490</scope>
</reference>
<reference key="10">
    <citation type="journal article" date="2010" name="Invest. Ophthalmol. Vis. Sci.">
        <title>A novel ADAMTSL4 mutation in autosomal recessive ectopia lentis et pupillae.</title>
        <authorList>
            <person name="Christensen A.E."/>
            <person name="Fiskerstrand T."/>
            <person name="Knappskog P.M."/>
            <person name="Boman H."/>
            <person name="Roedahl E."/>
        </authorList>
    </citation>
    <scope>INVOLVEMENT IN ECTOLP</scope>
</reference>
<reference key="11">
    <citation type="journal article" date="2012" name="Invest. Ophthalmol. Vis. Sci.">
        <title>ADAMTSL4, a secreted glycoprotein widely distributed in the eye, binds Fibrillin-1 microfibrils and accelerates microfibril biogenesis.</title>
        <authorList>
            <person name="Gabriel L.A."/>
            <person name="Wang L.W."/>
            <person name="Bader H."/>
            <person name="Ho J.C."/>
            <person name="Majors A.K."/>
            <person name="Hollyfield J.G."/>
            <person name="Traboulsi E.I."/>
            <person name="Apte S.S."/>
        </authorList>
    </citation>
    <scope>FUNCTION</scope>
    <scope>SUBCELLULAR LOCATION</scope>
    <scope>INTERACTION WITH FBN1</scope>
    <scope>GLYCOSYLATION</scope>
</reference>
<reference key="12">
    <citation type="journal article" date="2014" name="J. Proteomics">
        <title>An enzyme assisted RP-RPLC approach for in-depth analysis of human liver phosphoproteome.</title>
        <authorList>
            <person name="Bian Y."/>
            <person name="Song C."/>
            <person name="Cheng K."/>
            <person name="Dong M."/>
            <person name="Wang F."/>
            <person name="Huang J."/>
            <person name="Sun D."/>
            <person name="Wang L."/>
            <person name="Ye M."/>
            <person name="Zou H."/>
        </authorList>
    </citation>
    <scope>IDENTIFICATION BY MASS SPECTROMETRY [LARGE SCALE ANALYSIS]</scope>
    <source>
        <tissue>Liver</tissue>
    </source>
</reference>
<accession>Q6UY14</accession>
<accession>B2RTT0</accession>
<accession>F8WAD0</accession>
<accession>Q5T5F7</accession>
<accession>Q6IPM6</accession>
<accession>Q8N643</accession>
<accession>Q9HBS6</accession>
<protein>
    <recommendedName>
        <fullName>ADAMTS-like protein 4</fullName>
        <shortName>ADAMTSL-4</shortName>
    </recommendedName>
    <alternativeName>
        <fullName>Thrombospondin repeat-containing protein 1</fullName>
    </alternativeName>
</protein>
<gene>
    <name type="primary">ADAMTSL4</name>
    <name evidence="20" type="synonym">TSRC1</name>
    <name type="ORF">PP1396</name>
    <name type="ORF">UNQ2803/PRO34012</name>
</gene>